<protein>
    <recommendedName>
        <fullName evidence="26">Glutamate receptor ionotropic, NMDA 2B</fullName>
        <shortName evidence="25">GluN2B</shortName>
    </recommendedName>
    <alternativeName>
        <fullName>Glutamate [NMDA] receptor subunit epsilon-2</fullName>
    </alternativeName>
    <alternativeName>
        <fullName>N-methyl D-aspartate receptor subtype 2B</fullName>
        <shortName>NMDAR2B</shortName>
        <shortName evidence="24">NR2B</shortName>
    </alternativeName>
</protein>
<keyword id="KW-0002">3D-structure</keyword>
<keyword id="KW-0106">Calcium</keyword>
<keyword id="KW-1003">Cell membrane</keyword>
<keyword id="KW-0963">Cytoplasm</keyword>
<keyword id="KW-0206">Cytoskeleton</keyword>
<keyword id="KW-0903">Direct protein sequencing</keyword>
<keyword id="KW-1015">Disulfide bond</keyword>
<keyword id="KW-0967">Endosome</keyword>
<keyword id="KW-0325">Glycoprotein</keyword>
<keyword id="KW-0407">Ion channel</keyword>
<keyword id="KW-0406">Ion transport</keyword>
<keyword id="KW-1071">Ligand-gated ion channel</keyword>
<keyword id="KW-0458">Lysosome</keyword>
<keyword id="KW-0460">Magnesium</keyword>
<keyword id="KW-0472">Membrane</keyword>
<keyword id="KW-0479">Metal-binding</keyword>
<keyword id="KW-0597">Phosphoprotein</keyword>
<keyword id="KW-0628">Postsynaptic cell membrane</keyword>
<keyword id="KW-0675">Receptor</keyword>
<keyword id="KW-1185">Reference proteome</keyword>
<keyword id="KW-0732">Signal</keyword>
<keyword id="KW-0770">Synapse</keyword>
<keyword id="KW-0812">Transmembrane</keyword>
<keyword id="KW-1133">Transmembrane helix</keyword>
<keyword id="KW-0813">Transport</keyword>
<keyword id="KW-0862">Zinc</keyword>
<comment type="function">
    <text evidence="2 3 7 8 10 11 13 14 15 21 22">Component of N-methyl-D-aspartate (NMDA) receptors (NMDARs) that function as heterotetrameric, ligand-gated cation channels with high calcium permeability and voltage-dependent block by Mg(2+) (PubMed:11929923, PubMed:19910922, PubMed:21677647, PubMed:24607230, PubMed:24876489, PubMed:27135925, PubMed:7524561). Participates in synaptic plasticity for learning and memory formation by contributing to the long-term depression (LTD) of hippocampus membrane currents (By similarity). Channel activation requires binding of the neurotransmitter L-glutamate to the GluN2 subunit, glycine or D-serine binding to the GluN1 subunit, plus membrane depolarization to eliminate channel inhibition by Mg(2+) (PubMed:11929923, PubMed:19910922, PubMed:21677647, PubMed:24607230, PubMed:24876489, PubMed:27135925, PubMed:7524561). NMDARs mediate simultaneously the potasium efflux and the influx of calcium and sodium (By similarity). Each GluN2 subunit confers differential attributes to channel properties, including activation, deactivation and desensitization kinetics, pH sensitivity, Ca2(+) permeability, and binding to allosteric modulators (PubMed:10436042, PubMed:11929923, PubMed:24607230, PubMed:9463421). In concert with DAPK1 at extrasynaptic sites, acts as a central mediator for stroke damage (By similarity). Its phosphorylation at Ser-1303 by DAPK1 enhances synaptic NMDA receptor channel activity inducing injurious Ca2+ influx through them, resulting in an irreversible neuronal death (By similarity).</text>
</comment>
<comment type="catalytic activity">
    <reaction evidence="8 10 11 13 14 15 21">
        <text>Ca(2+)(in) = Ca(2+)(out)</text>
        <dbReference type="Rhea" id="RHEA:29671"/>
        <dbReference type="ChEBI" id="CHEBI:29108"/>
    </reaction>
</comment>
<comment type="catalytic activity">
    <reaction evidence="8">
        <text>Na(+)(in) = Na(+)(out)</text>
        <dbReference type="Rhea" id="RHEA:34963"/>
        <dbReference type="ChEBI" id="CHEBI:29101"/>
    </reaction>
</comment>
<comment type="catalytic activity">
    <reaction evidence="2">
        <text>K(+)(in) = K(+)(out)</text>
        <dbReference type="Rhea" id="RHEA:29463"/>
        <dbReference type="ChEBI" id="CHEBI:29103"/>
    </reaction>
</comment>
<comment type="activity regulation">
    <text evidence="10 11 13">NMDA glutamate receptor activity is inhibited by micromolar levels of zinc ions (PubMed:19910922, PubMed:24607230). NMDA glutamate receptor activity is inhibited by ifenprodil (PubMed:19910922, PubMed:21677647).</text>
</comment>
<comment type="subunit">
    <text evidence="3 4 9 10 11 14 15 16 17 18 19">Heterotetramer. Forms heterotetrameric channels composed of two GluN1/zeta subunits (GRIN1), and two identical GluN2/epsilon subunits (GRIN2A, GRIN2B, GRIN2C or GRIN2D) or GluN3 subunits (GRIN3A or GRIN3B) (in vitro) (PubMed:1350383, PubMed:19910922, PubMed:21677647, PubMed:24876489, PubMed:27135925, PubMed:27916457). Can also form heterotetrameric channels that contain at least two GluN1 subunits and at least two different GluN2 subunits (or a combination of one GluN2 and one GluN3 subunits) (in vitro). In vivo, the subunit composition may depend on the expression levels of the different subunits. Found in a complex with GRIN1, GRIN3A and PPP2CB. Found in a complex with GRIN1 and GRIN3B. Interacts with MAGI3. Interacts with HIP1 and NETO1. Interacts with PDZ domains of PATJ, DLG3 and DLG4. Interacts with DAPK1 (By similarity). Found in a complex with GRIN1 and PRR7 (PubMed:27458189). Interacts with PRR7 (PubMed:27458189). Interacts with CAMK2A (By similarity). Interacts with ARC; preventing ARC oligomerization (PubMed:31080121). Interacts with TMEM25 (By similarity). Interacts (via the extreme C-terminus) with FRMPD2 (via the second PDZ domain); the interaction is direct and is likely to promote NMDAR-mediated neural signal transmission (By similarity). Interacts with FAM81A; the interaction facilitates condensate formation via liquid-liquid phase separation (By similarity).</text>
</comment>
<comment type="interaction">
    <interactant intactId="EBI-396905">
        <id>Q00960</id>
    </interactant>
    <interactant intactId="EBI-2640645">
        <id>P11275</id>
        <label>Camk2a</label>
    </interactant>
    <organismsDiffer>false</organismsDiffer>
    <experiments>2</experiments>
</comment>
<comment type="interaction">
    <interactant intactId="EBI-396905">
        <id>Q00960</id>
    </interactant>
    <interactant intactId="EBI-349596">
        <id>Q62936</id>
        <label>Dlg3</label>
    </interactant>
    <organismsDiffer>false</organismsDiffer>
    <experiments>6</experiments>
</comment>
<comment type="interaction">
    <interactant intactId="EBI-396905">
        <id>Q00960</id>
    </interactant>
    <interactant intactId="EBI-375655">
        <id>P31016</id>
        <label>Dlg4</label>
    </interactant>
    <organismsDiffer>false</organismsDiffer>
    <experiments>8</experiments>
</comment>
<comment type="interaction">
    <interactant intactId="EBI-396905">
        <id>Q00960</id>
    </interactant>
    <interactant intactId="EBI-877897">
        <id>P35439</id>
        <label>Grin1</label>
    </interactant>
    <organismsDiffer>false</organismsDiffer>
    <experiments>13</experiments>
</comment>
<comment type="interaction">
    <interactant intactId="EBI-396905">
        <id>Q00960</id>
    </interactant>
    <interactant intactId="EBI-15932497">
        <id>P35439-7</id>
        <label>Grin1</label>
    </interactant>
    <organismsDiffer>false</organismsDiffer>
    <experiments>2</experiments>
</comment>
<comment type="interaction">
    <interactant intactId="EBI-396905">
        <id>Q00960</id>
    </interactant>
    <interactant intactId="EBI-877185">
        <id>Q460M5</id>
        <label>Lrfn2</label>
    </interactant>
    <organismsDiffer>false</organismsDiffer>
    <experiments>2</experiments>
</comment>
<comment type="interaction">
    <interactant intactId="EBI-396905">
        <id>Q00960</id>
    </interactant>
    <interactant intactId="EBI-400384">
        <id>P11798</id>
        <label>Camk2a</label>
    </interactant>
    <organismsDiffer>true</organismsDiffer>
    <experiments>4</experiments>
</comment>
<comment type="interaction">
    <interactant intactId="EBI-396905">
        <id>Q00960</id>
    </interactant>
    <interactant intactId="EBI-16582829">
        <id>A0A1L8F5J9-8</id>
        <label>grin1</label>
    </interactant>
    <organismsDiffer>true</organismsDiffer>
    <experiments>6</experiments>
</comment>
<comment type="interaction">
    <interactant intactId="EBI-396905">
        <id>Q00960</id>
    </interactant>
    <interactant intactId="EBI-2314926">
        <id>Q8R4I7</id>
        <label>Neto1</label>
    </interactant>
    <organismsDiffer>true</organismsDiffer>
    <experiments>2</experiments>
</comment>
<comment type="interaction">
    <interactant intactId="EBI-396905">
        <id>Q00960</id>
    </interactant>
    <interactant intactId="EBI-8366894">
        <id>Q63ZW7</id>
        <label>Patj</label>
    </interactant>
    <organismsDiffer>true</organismsDiffer>
    <experiments>4</experiments>
</comment>
<comment type="subcellular location">
    <subcellularLocation>
        <location evidence="9 10 11 14 15 17">Cell membrane</location>
        <topology evidence="14 15">Multi-pass membrane protein</topology>
    </subcellularLocation>
    <subcellularLocation>
        <location evidence="20 23">Postsynaptic cell membrane</location>
        <topology evidence="14 15">Multi-pass membrane protein</topology>
    </subcellularLocation>
    <subcellularLocation>
        <location evidence="3">Late endosome</location>
    </subcellularLocation>
    <subcellularLocation>
        <location evidence="3">Lysosome</location>
    </subcellularLocation>
    <subcellularLocation>
        <location evidence="3">Cytoplasm</location>
        <location evidence="3">Cytoskeleton</location>
    </subcellularLocation>
    <text evidence="3">Co-localizes with the motor protein KIF17 along microtubules.</text>
</comment>
<comment type="tissue specificity">
    <text evidence="12 23">Expressed in the hippocampus including the dentate gyrus (at protein level) (PubMed:22960932). Detected in adult olfactory bulb, brain cortex, hippocampus, striatum, thalamus, superior colliculus, with much lower levels in inferior colliculus, midbrain and cerebellum.</text>
</comment>
<comment type="developmental stage">
    <text evidence="12">Expressed during postnatal days P3 to P60, with decreased expression after postnatal day 14.</text>
</comment>
<comment type="domain">
    <text evidence="10">The extracellular N-terminal domain (ATD/NTD) endows NMDARs with a unique capacity for allosteric modulation, harboring several binding sites for small molecule ligands that act as subunit-specific allosteric modulators of ion channel activity.</text>
</comment>
<comment type="domain">
    <text evidence="27">A hydrophobic region that gives rise to the prediction of a transmembrane span does not cross the membrane, but is part of a discontinuously helical region that dips into the membrane and is probably part of the pore and of the selectivity filter.</text>
</comment>
<comment type="PTM">
    <text evidence="3 20">Phosphorylated on tyrosine residues (PubMed:7513428). Phosphorylation at Ser-1303 by DAPK1 enhances synaptic NMDA receptor channel activity (By similarity).</text>
</comment>
<comment type="similarity">
    <text evidence="26">Belongs to the glutamate-gated ion channel (TC 1.A.10.1) family. NR2B/GRIN2B subfamily.</text>
</comment>
<reference key="1">
    <citation type="journal article" date="1992" name="Science">
        <title>Heteromeric NMDA receptors: molecular and functional distinction of subtypes.</title>
        <authorList>
            <person name="Monyer H."/>
            <person name="Sprengel R."/>
            <person name="Schoepfer R."/>
            <person name="Herb A."/>
            <person name="Higuchi M."/>
            <person name="Lomeli H."/>
            <person name="Burnashev N."/>
            <person name="Sakmann B."/>
            <person name="Seeburg P.H."/>
        </authorList>
    </citation>
    <scope>NUCLEOTIDE SEQUENCE [MRNA]</scope>
    <scope>SUBCELLULAR LOCATION</scope>
    <scope>SUBUNIT</scope>
    <source>
        <tissue>Brain</tissue>
    </source>
</reference>
<reference key="2">
    <citation type="journal article" date="1994" name="Neuron">
        <title>Identification of two cysteine residues that are required for redox modulation of the NMDA subtype of glutamate receptor.</title>
        <authorList>
            <person name="Sullivan J.M."/>
            <person name="Traynelis S.F."/>
            <person name="Chen H.S."/>
            <person name="Escobar W."/>
            <person name="Heinemann S.F."/>
            <person name="Lipton S.A."/>
        </authorList>
    </citation>
    <scope>NUCLEOTIDE SEQUENCE [MRNA]</scope>
    <scope>FUNCTION</scope>
    <scope>TRANSPORTER ACTIVITY</scope>
</reference>
<reference key="3">
    <citation type="journal article" date="1994" name="Proc. Natl. Acad. Sci. U.S.A.">
        <title>The major tyrosine-phosphorylated protein in the postsynaptic density fraction is N-methyl-D-aspartate receptor subunit 2B.</title>
        <authorList>
            <person name="Moon I.S."/>
            <person name="Apperson M.L."/>
            <person name="Kennedy M.B."/>
        </authorList>
    </citation>
    <scope>PARTIAL PROTEIN SEQUENCE</scope>
    <scope>PHOSPHORYLATION</scope>
    <scope>SUBCELLULAR LOCATION</scope>
</reference>
<reference key="4">
    <citation type="journal article" date="1995" name="Science">
        <title>Domain interaction between NMDA receptor subunits and the postsynaptic density protein PSD-95.</title>
        <authorList>
            <person name="Kornau H.C."/>
            <person name="Schenker L.T."/>
            <person name="Kennedy M.B."/>
            <person name="Seeburg P.H."/>
        </authorList>
    </citation>
    <scope>INTERACTION WITH DLG4</scope>
</reference>
<reference key="5">
    <citation type="journal article" date="1997" name="Mol. Cells">
        <title>Immunoblot analyses on the differential distribution of NR2A and NR2B subunits in the adult rat brain.</title>
        <authorList>
            <person name="Jin D.H."/>
            <person name="Jung Y.W."/>
            <person name="Ko B.H."/>
            <person name="Moon I.S."/>
        </authorList>
    </citation>
    <scope>SUBCELLULAR LOCATION</scope>
    <scope>TISSUE SPECIFICITY</scope>
</reference>
<reference key="6">
    <citation type="journal article" date="1998" name="J. Neurophysiol.">
        <title>Functional and pharmacological differences between recombinant N-methyl-D-aspartate receptors.</title>
        <authorList>
            <person name="Vicini S."/>
            <person name="Wang J.F."/>
            <person name="Li J.H."/>
            <person name="Zhu W.J."/>
            <person name="Wang Y.H."/>
            <person name="Luo J.H."/>
            <person name="Wolfe B.B."/>
            <person name="Grayson D.R."/>
        </authorList>
    </citation>
    <scope>FUNCTION</scope>
</reference>
<reference key="7">
    <citation type="journal article" date="1998" name="Mol. Cell. Neurosci.">
        <title>CIPP, a novel multivalent PDZ domain protein, selectively interacts with Kir4.0 family members, NMDA receptor subunits, neurexins, and neuroligins.</title>
        <authorList>
            <person name="Kurschner C."/>
            <person name="Mermelstein P.G."/>
            <person name="Holden W.T."/>
            <person name="Surmeier D.J."/>
        </authorList>
    </citation>
    <scope>INTERACTION WITH PATJ</scope>
</reference>
<reference key="8">
    <citation type="journal article" date="1999" name="J. Neurosci.">
        <title>Subtype-dependence of NMDA receptor channel open probability.</title>
        <authorList>
            <person name="Chen N."/>
            <person name="Luo T."/>
            <person name="Raymond L.A."/>
        </authorList>
    </citation>
    <scope>FUNCTION</scope>
</reference>
<reference key="9">
    <citation type="journal article" date="2001" name="J. Neurosci.">
        <title>An NMDA receptor signaling complex with protein phosphatase 2A.</title>
        <authorList>
            <person name="Chan S.F."/>
            <person name="Sucher N.J."/>
        </authorList>
    </citation>
    <scope>IDENTIFICATION IN A COMPLEX WITH GRIN1; GRIN3A AND PPP2CB</scope>
</reference>
<reference key="10">
    <citation type="journal article" date="2002" name="Mol. Pharmacol.">
        <title>Association of NR3A with the N-methyl-D-aspartate receptor NR1 and NR2 subunits.</title>
        <authorList>
            <person name="Al-Hallaq R.A."/>
            <person name="Jarabek B.R."/>
            <person name="Fu Z."/>
            <person name="Vicini S."/>
            <person name="Wolfe B.B."/>
            <person name="Yasuda R.P."/>
        </authorList>
    </citation>
    <scope>IDENTIFICATION IN A COMPLEX WITH GRIN1 AND GRIN3A</scope>
</reference>
<reference key="11">
    <citation type="journal article" date="2002" name="J. Neurophysiol.">
        <title>Characterization and comparison of the NR3A subunit of the NMDA receptor in recombinant systems and primary cortical neurons.</title>
        <authorList>
            <person name="Sasaki Y.F."/>
            <person name="Rothe T."/>
            <person name="Premkumar L.S."/>
            <person name="Das S."/>
            <person name="Cui J."/>
            <person name="Talantova M.V."/>
            <person name="Wong H.-K."/>
            <person name="Gong X."/>
            <person name="Chan S.F."/>
            <person name="Zhang D."/>
            <person name="Nakanishi N."/>
            <person name="Sucher N.J."/>
            <person name="Lipton S.A."/>
        </authorList>
    </citation>
    <scope>FUNCTION</scope>
    <scope>TRANSPORTER ACTIVITY</scope>
    <scope>IDENTIFICATION IN A COMPLEX WITH GRIN1 AND GRIN3A</scope>
</reference>
<reference key="12">
    <citation type="journal article" date="2012" name="Nat. Commun.">
        <title>Quantitative maps of protein phosphorylation sites across 14 different rat organs and tissues.</title>
        <authorList>
            <person name="Lundby A."/>
            <person name="Secher A."/>
            <person name="Lage K."/>
            <person name="Nordsborg N.B."/>
            <person name="Dmytriyev A."/>
            <person name="Lundby C."/>
            <person name="Olsen J.V."/>
        </authorList>
    </citation>
    <scope>PHOSPHORYLATION [LARGE SCALE ANALYSIS] AT SER-882; SER-886; SER-917; SER-920; TYR-1039; SER-1255; SER-1259 AND SER-1303</scope>
    <scope>IDENTIFICATION BY MASS SPECTROMETRY [LARGE SCALE ANALYSIS]</scope>
</reference>
<reference key="13">
    <citation type="journal article" date="2012" name="Nat. Neurosci.">
        <title>REST-dependent epigenetic remodeling promotes the developmental switch in synaptic NMDA receptors.</title>
        <authorList>
            <person name="Rodenas-Ruano A."/>
            <person name="Chavez A.E."/>
            <person name="Cossio M.J."/>
            <person name="Castillo P.E."/>
            <person name="Zukin R.S."/>
        </authorList>
    </citation>
    <scope>TISSUE SPECIFICITY</scope>
    <scope>DEVELOPMENTAL STAGE</scope>
</reference>
<reference key="14">
    <citation type="journal article" date="2014" name="Neuron">
        <title>Distinct functional and pharmacological properties of Triheteromeric GluN1/GluN2A/GluN2B NMDA receptors.</title>
        <authorList>
            <person name="Hansen K.B."/>
            <person name="Ogden K.K."/>
            <person name="Yuan H."/>
            <person name="Traynelis S.F."/>
        </authorList>
    </citation>
    <scope>FUNCTION</scope>
    <scope>TRANSPORTER ACTIVITY</scope>
    <scope>ACTIVITY REGULATION</scope>
</reference>
<reference key="15">
    <citation type="journal article" date="2016" name="EMBO J.">
        <title>Synaptonuclear messenger PRR7 inhibits c-Jun ubiquitination and regulates NMDA-mediated excitotoxicity.</title>
        <authorList>
            <person name="Kravchick D.O."/>
            <person name="Karpova A."/>
            <person name="Hrdinka M."/>
            <person name="Lopez-Rojas J."/>
            <person name="Iacobas S."/>
            <person name="Carbonell A.U."/>
            <person name="Iacobas D.A."/>
            <person name="Kreutz M.R."/>
            <person name="Jordan B.A."/>
        </authorList>
    </citation>
    <scope>FUNCTION</scope>
    <scope>IDENTIFICATION IN A COMPLEX WITH GRIN1 AND PRR7</scope>
    <scope>INTERACTION WITH PRR7</scope>
</reference>
<reference key="16">
    <citation type="journal article" date="2017" name="J. Neurosci.">
        <title>A Rare Variant Identified Within the GluN2B C-Terminus in a Patient with Autism Affects NMDA Receptor Surface Expression and Spine Density.</title>
        <authorList>
            <person name="Liu S."/>
            <person name="Zhou L."/>
            <person name="Yuan H."/>
            <person name="Vieira M."/>
            <person name="Sanz-Clemente A."/>
            <person name="Badger J.D. II"/>
            <person name="Lu W."/>
            <person name="Traynelis S.F."/>
            <person name="Roche K.W."/>
        </authorList>
    </citation>
    <scope>INTERACTION WITH DLG3 AND DLG4</scope>
    <scope>MUTAGENESIS OF SER-1413; LEU-1422 AND SER-1450</scope>
</reference>
<reference key="17">
    <citation type="journal article" date="2019" name="Structure">
        <title>The capsid domain of Arc changes its oligomerization propensity through direct interaction with the NMDA receptor.</title>
        <authorList>
            <person name="Nielsen L.D."/>
            <person name="Pedersen C.P."/>
            <person name="Erlendsson S."/>
            <person name="Teilum K."/>
        </authorList>
    </citation>
    <scope>INTERACTION WITH ARC</scope>
</reference>
<reference evidence="29 30" key="18">
    <citation type="journal article" date="2009" name="EMBO J.">
        <title>Structure of the zinc-bound amino-terminal domain of the NMDA receptor NR2B subunit.</title>
        <authorList>
            <person name="Karakas E."/>
            <person name="Simorowski N."/>
            <person name="Furukawa H."/>
        </authorList>
    </citation>
    <scope>X-RAY CRYSTALLOGRAPHY (2.80 ANGSTROMS) OF 32-394 IN COMPLEX WITH ZN(2+)</scope>
    <scope>FUNCTION</scope>
    <scope>TRANSPORTER ACTIVITY</scope>
    <scope>SUBCELLULAR LOCATION</scope>
    <scope>SUBUNIT</scope>
    <scope>ACTIVITY REGULATION</scope>
    <scope>DOMAIN</scope>
    <scope>GLYCOSYLATION AT ASN-74 AND ASN-341</scope>
    <scope>MUTAGENESIS OF HIS-60; HIS-127; ASP-283; GLU-284; HIS-311 AND HIS-359</scope>
    <scope>DISULFIDE BOND</scope>
</reference>
<reference evidence="31 32" key="19">
    <citation type="journal article" date="2011" name="Nature">
        <title>Subunit arrangement and phenylethanolamine binding in GluN1/GluN2B NMDA receptors.</title>
        <authorList>
            <person name="Karakas E."/>
            <person name="Simorowski N."/>
            <person name="Furukawa H."/>
        </authorList>
    </citation>
    <scope>X-RAY CRYSTALLOGRAPHY (2.60 ANGSTROMS) OF 31-394 IN COMPLEX WITH GRIN1</scope>
    <scope>FUNCTION</scope>
    <scope>TRANSPORTER ACTIVITY</scope>
    <scope>SUBCELLULAR LOCATION</scope>
    <scope>SUBUNIT</scope>
    <scope>ACTIVITY REGULATION</scope>
    <scope>GLYCOSYLATION AT ASN-74 AND ASN-341</scope>
    <scope>DISULFIDE BONDS</scope>
</reference>
<reference evidence="33" key="20">
    <citation type="journal article" date="2014" name="Science">
        <title>Crystal structure of a heterotetrameric NMDA receptor ion channel.</title>
        <authorList>
            <person name="Karakas E."/>
            <person name="Furukawa H."/>
        </authorList>
    </citation>
    <scope>X-RAY CRYSTALLOGRAPHY (3.96 ANGSTROMS) OF 27-852 IN COMPLEX WITH GRIN1 AND GLUTAMATE</scope>
    <scope>FUNCTION</scope>
    <scope>TRANSPORTER ACTIVITY</scope>
    <scope>SUBCELLULAR LOCATION</scope>
    <scope>TOPOLOGY</scope>
    <scope>SUBUNIT</scope>
    <scope>GLYCOSYLATION AT ASN-74; ASN-341 AND ASN-688</scope>
    <scope>DISULFIDE BONDS</scope>
</reference>
<reference evidence="34 35 36 37 38 39" key="21">
    <citation type="journal article" date="2016" name="Nature">
        <title>Activation of NMDA receptors and the mechanism of inhibition by ifenprodil.</title>
        <authorList>
            <person name="Tajima N."/>
            <person name="Karakas E."/>
            <person name="Grant T."/>
            <person name="Simorowski N."/>
            <person name="Diaz-Avalos R."/>
            <person name="Grigorieff N."/>
            <person name="Furukawa H."/>
        </authorList>
    </citation>
    <scope>X-RAY CRYSTALLOGRAPHY (2.90 ANGSTROMS) OF 31-394</scope>
    <scope>STRUCTURE BY ELECTRON MICROSCOPY (6.1 ANGSTROMS) OF 27-852 IN COMPLEX WITH GRIN1</scope>
    <scope>FUNCTION</scope>
    <scope>TRANSPORTER ACTIVITY</scope>
    <scope>SUBCELLULAR LOCATION</scope>
    <scope>SUBUNIT</scope>
    <scope>TOPOLOGY</scope>
    <scope>DISULFIDE BONDS</scope>
</reference>
<reference evidence="40" key="22">
    <citation type="journal article" date="2016" name="Neuron">
        <title>Molecular Basis for Subtype Specificity and High-Affinity Zinc Inhibition in the GluN1-GluN2A NMDA Receptor Amino-Terminal Domain.</title>
        <authorList>
            <person name="Romero-Hernandez A."/>
            <person name="Simorowski N."/>
            <person name="Karakas E."/>
            <person name="Furukawa H."/>
        </authorList>
    </citation>
    <scope>X-RAY CRYSTALLOGRAPHY (3.10 ANGSTROMS) OF 32-393 IN COMPLEX WITH GRIN1</scope>
    <scope>SUBCELLULAR LOCATION</scope>
    <scope>SUBUNIT</scope>
    <scope>GLYCOSYLATION AT ASN-341</scope>
    <scope>DISULFIDE BONDS</scope>
</reference>
<proteinExistence type="evidence at protein level"/>
<evidence type="ECO:0000250" key="1"/>
<evidence type="ECO:0000250" key="2">
    <source>
        <dbReference type="UniProtKB" id="P35438"/>
    </source>
</evidence>
<evidence type="ECO:0000250" key="3">
    <source>
        <dbReference type="UniProtKB" id="Q01097"/>
    </source>
</evidence>
<evidence type="ECO:0000250" key="4">
    <source>
        <dbReference type="UniProtKB" id="Q13224"/>
    </source>
</evidence>
<evidence type="ECO:0000255" key="5"/>
<evidence type="ECO:0000256" key="6">
    <source>
        <dbReference type="SAM" id="MobiDB-lite"/>
    </source>
</evidence>
<evidence type="ECO:0000269" key="7">
    <source>
    </source>
</evidence>
<evidence type="ECO:0000269" key="8">
    <source>
    </source>
</evidence>
<evidence type="ECO:0000269" key="9">
    <source>
    </source>
</evidence>
<evidence type="ECO:0000269" key="10">
    <source>
    </source>
</evidence>
<evidence type="ECO:0000269" key="11">
    <source>
    </source>
</evidence>
<evidence type="ECO:0000269" key="12">
    <source>
    </source>
</evidence>
<evidence type="ECO:0000269" key="13">
    <source>
    </source>
</evidence>
<evidence type="ECO:0000269" key="14">
    <source>
    </source>
</evidence>
<evidence type="ECO:0000269" key="15">
    <source>
    </source>
</evidence>
<evidence type="ECO:0000269" key="16">
    <source>
    </source>
</evidence>
<evidence type="ECO:0000269" key="17">
    <source>
    </source>
</evidence>
<evidence type="ECO:0000269" key="18">
    <source>
    </source>
</evidence>
<evidence type="ECO:0000269" key="19">
    <source>
    </source>
</evidence>
<evidence type="ECO:0000269" key="20">
    <source>
    </source>
</evidence>
<evidence type="ECO:0000269" key="21">
    <source>
    </source>
</evidence>
<evidence type="ECO:0000269" key="22">
    <source>
    </source>
</evidence>
<evidence type="ECO:0000269" key="23">
    <source>
    </source>
</evidence>
<evidence type="ECO:0000303" key="24">
    <source>
    </source>
</evidence>
<evidence type="ECO:0000303" key="25">
    <source>
    </source>
</evidence>
<evidence type="ECO:0000305" key="26"/>
<evidence type="ECO:0000305" key="27">
    <source>
    </source>
</evidence>
<evidence type="ECO:0000312" key="28">
    <source>
        <dbReference type="RGD" id="2738"/>
    </source>
</evidence>
<evidence type="ECO:0007744" key="29">
    <source>
        <dbReference type="PDB" id="3JPW"/>
    </source>
</evidence>
<evidence type="ECO:0007744" key="30">
    <source>
        <dbReference type="PDB" id="3JPY"/>
    </source>
</evidence>
<evidence type="ECO:0007744" key="31">
    <source>
        <dbReference type="PDB" id="3QEL"/>
    </source>
</evidence>
<evidence type="ECO:0007744" key="32">
    <source>
        <dbReference type="PDB" id="3QEM"/>
    </source>
</evidence>
<evidence type="ECO:0007744" key="33">
    <source>
        <dbReference type="PDB" id="4PE5"/>
    </source>
</evidence>
<evidence type="ECO:0007744" key="34">
    <source>
        <dbReference type="PDB" id="5B3J"/>
    </source>
</evidence>
<evidence type="ECO:0007744" key="35">
    <source>
        <dbReference type="PDB" id="5FXG"/>
    </source>
</evidence>
<evidence type="ECO:0007744" key="36">
    <source>
        <dbReference type="PDB" id="5FXH"/>
    </source>
</evidence>
<evidence type="ECO:0007744" key="37">
    <source>
        <dbReference type="PDB" id="5FXI"/>
    </source>
</evidence>
<evidence type="ECO:0007744" key="38">
    <source>
        <dbReference type="PDB" id="5FXJ"/>
    </source>
</evidence>
<evidence type="ECO:0007744" key="39">
    <source>
        <dbReference type="PDB" id="5FXK"/>
    </source>
</evidence>
<evidence type="ECO:0007744" key="40">
    <source>
        <dbReference type="PDB" id="5TPZ"/>
    </source>
</evidence>
<evidence type="ECO:0007744" key="41">
    <source>
    </source>
</evidence>
<evidence type="ECO:0007829" key="42">
    <source>
        <dbReference type="PDB" id="3QEL"/>
    </source>
</evidence>
<evidence type="ECO:0007829" key="43">
    <source>
        <dbReference type="PDB" id="5B3J"/>
    </source>
</evidence>
<evidence type="ECO:0007829" key="44">
    <source>
        <dbReference type="PDB" id="5TPZ"/>
    </source>
</evidence>
<evidence type="ECO:0007829" key="45">
    <source>
        <dbReference type="PDB" id="6E7R"/>
    </source>
</evidence>
<evidence type="ECO:0007829" key="46">
    <source>
        <dbReference type="PDB" id="7SAA"/>
    </source>
</evidence>
<evidence type="ECO:0007829" key="47">
    <source>
        <dbReference type="PDB" id="8G18"/>
    </source>
</evidence>
<evidence type="ECO:0007829" key="48">
    <source>
        <dbReference type="PDB" id="9ARF"/>
    </source>
</evidence>
<accession>Q00960</accession>
<accession>Q62684</accession>
<dbReference type="EMBL" id="M91562">
    <property type="protein sequence ID" value="AAA41714.1"/>
    <property type="molecule type" value="mRNA"/>
</dbReference>
<dbReference type="EMBL" id="U11419">
    <property type="protein sequence ID" value="AAA50554.1"/>
    <property type="molecule type" value="mRNA"/>
</dbReference>
<dbReference type="PIR" id="B43274">
    <property type="entry name" value="B43274"/>
</dbReference>
<dbReference type="RefSeq" id="NP_036706.1">
    <property type="nucleotide sequence ID" value="NM_012574.1"/>
</dbReference>
<dbReference type="PDB" id="3JPW">
    <property type="method" value="X-ray"/>
    <property type="resolution" value="2.80 A"/>
    <property type="chains" value="A=32-394"/>
</dbReference>
<dbReference type="PDB" id="3JPY">
    <property type="method" value="X-ray"/>
    <property type="resolution" value="3.21 A"/>
    <property type="chains" value="A=32-394"/>
</dbReference>
<dbReference type="PDB" id="3QEL">
    <property type="method" value="X-ray"/>
    <property type="resolution" value="2.60 A"/>
    <property type="chains" value="B/D=31-394"/>
</dbReference>
<dbReference type="PDB" id="3QEM">
    <property type="method" value="X-ray"/>
    <property type="resolution" value="3.00 A"/>
    <property type="chains" value="B/D=31-394"/>
</dbReference>
<dbReference type="PDB" id="4PE5">
    <property type="method" value="X-ray"/>
    <property type="resolution" value="3.96 A"/>
    <property type="chains" value="B/D=27-852"/>
</dbReference>
<dbReference type="PDB" id="5B3J">
    <property type="method" value="X-ray"/>
    <property type="resolution" value="2.90 A"/>
    <property type="chains" value="C/D=31-394"/>
</dbReference>
<dbReference type="PDB" id="5FXG">
    <property type="method" value="EM"/>
    <property type="resolution" value="6.80 A"/>
    <property type="chains" value="B/D=27-852"/>
</dbReference>
<dbReference type="PDB" id="5FXH">
    <property type="method" value="EM"/>
    <property type="resolution" value="6.10 A"/>
    <property type="chains" value="B/D=27-852"/>
</dbReference>
<dbReference type="PDB" id="5FXI">
    <property type="method" value="EM"/>
    <property type="resolution" value="6.40 A"/>
    <property type="chains" value="B/D=27-852"/>
</dbReference>
<dbReference type="PDB" id="5FXJ">
    <property type="method" value="EM"/>
    <property type="resolution" value="6.50 A"/>
    <property type="chains" value="B/D=27-852"/>
</dbReference>
<dbReference type="PDB" id="5FXK">
    <property type="method" value="EM"/>
    <property type="resolution" value="6.40 A"/>
    <property type="chains" value="B/D=27-852"/>
</dbReference>
<dbReference type="PDB" id="5TPZ">
    <property type="method" value="X-ray"/>
    <property type="resolution" value="3.10 A"/>
    <property type="chains" value="D=32-393"/>
</dbReference>
<dbReference type="PDB" id="6CNA">
    <property type="method" value="EM"/>
    <property type="resolution" value="4.60 A"/>
    <property type="chains" value="B/D=34-843"/>
</dbReference>
<dbReference type="PDB" id="6E7R">
    <property type="method" value="X-ray"/>
    <property type="resolution" value="2.10 A"/>
    <property type="chains" value="B/D=32-394"/>
</dbReference>
<dbReference type="PDB" id="6E7S">
    <property type="method" value="X-ray"/>
    <property type="resolution" value="2.72 A"/>
    <property type="chains" value="B/D=32-394"/>
</dbReference>
<dbReference type="PDB" id="6E7T">
    <property type="method" value="X-ray"/>
    <property type="resolution" value="2.31 A"/>
    <property type="chains" value="B/D=32-393"/>
</dbReference>
<dbReference type="PDB" id="6E7U">
    <property type="method" value="X-ray"/>
    <property type="resolution" value="2.27 A"/>
    <property type="chains" value="B/D=32-394"/>
</dbReference>
<dbReference type="PDB" id="6E7V">
    <property type="method" value="X-ray"/>
    <property type="resolution" value="2.60 A"/>
    <property type="chains" value="B/D=32-394"/>
</dbReference>
<dbReference type="PDB" id="6E7W">
    <property type="method" value="X-ray"/>
    <property type="resolution" value="2.67 A"/>
    <property type="chains" value="B/D=32-394"/>
</dbReference>
<dbReference type="PDB" id="6E7X">
    <property type="method" value="X-ray"/>
    <property type="resolution" value="2.58 A"/>
    <property type="chains" value="B/D=32-394"/>
</dbReference>
<dbReference type="PDB" id="6WHR">
    <property type="method" value="EM"/>
    <property type="resolution" value="3.99 A"/>
    <property type="chains" value="B/D=27-852"/>
</dbReference>
<dbReference type="PDB" id="6WHS">
    <property type="method" value="EM"/>
    <property type="resolution" value="4.00 A"/>
    <property type="chains" value="B/D=27-852"/>
</dbReference>
<dbReference type="PDB" id="6WHT">
    <property type="method" value="EM"/>
    <property type="resolution" value="4.39 A"/>
    <property type="chains" value="B/D=27-852"/>
</dbReference>
<dbReference type="PDB" id="6WHU">
    <property type="method" value="EM"/>
    <property type="resolution" value="3.93 A"/>
    <property type="chains" value="B/D=27-852"/>
</dbReference>
<dbReference type="PDB" id="6WHV">
    <property type="method" value="EM"/>
    <property type="resolution" value="4.05 A"/>
    <property type="chains" value="B/D=27-852"/>
</dbReference>
<dbReference type="PDB" id="6WHW">
    <property type="method" value="EM"/>
    <property type="resolution" value="4.09 A"/>
    <property type="chains" value="B/D=25-852"/>
</dbReference>
<dbReference type="PDB" id="6WHX">
    <property type="method" value="EM"/>
    <property type="resolution" value="4.09 A"/>
    <property type="chains" value="B/D=25-852"/>
</dbReference>
<dbReference type="PDB" id="6WHY">
    <property type="method" value="EM"/>
    <property type="resolution" value="4.03 A"/>
    <property type="chains" value="B/D=25-852"/>
</dbReference>
<dbReference type="PDB" id="6WI0">
    <property type="method" value="EM"/>
    <property type="resolution" value="4.27 A"/>
    <property type="chains" value="B/D=27-852"/>
</dbReference>
<dbReference type="PDB" id="6WI1">
    <property type="method" value="EM"/>
    <property type="resolution" value="3.62 A"/>
    <property type="chains" value="B/D=25-852"/>
</dbReference>
<dbReference type="PDB" id="7SAA">
    <property type="method" value="EM"/>
    <property type="resolution" value="2.97 A"/>
    <property type="chains" value="B/D=27-852"/>
</dbReference>
<dbReference type="PDB" id="7SAB">
    <property type="method" value="EM"/>
    <property type="resolution" value="4.30 A"/>
    <property type="chains" value="B/D=27-852"/>
</dbReference>
<dbReference type="PDB" id="7SAC">
    <property type="method" value="EM"/>
    <property type="resolution" value="3.69 A"/>
    <property type="chains" value="B/D=27-852"/>
</dbReference>
<dbReference type="PDB" id="7SAD">
    <property type="method" value="EM"/>
    <property type="resolution" value="3.96 A"/>
    <property type="chains" value="B/D=27-852"/>
</dbReference>
<dbReference type="PDB" id="7TE6">
    <property type="method" value="X-ray"/>
    <property type="resolution" value="4.55 A"/>
    <property type="chains" value="B/F=31-394"/>
</dbReference>
<dbReference type="PDB" id="7TE9">
    <property type="method" value="EM"/>
    <property type="resolution" value="3.92 A"/>
    <property type="chains" value="B/D=31-852"/>
</dbReference>
<dbReference type="PDB" id="7TEB">
    <property type="method" value="EM"/>
    <property type="resolution" value="4.23 A"/>
    <property type="chains" value="B/D=27-852"/>
</dbReference>
<dbReference type="PDB" id="7TEE">
    <property type="method" value="EM"/>
    <property type="resolution" value="6.59 A"/>
    <property type="chains" value="B/D=27-852"/>
</dbReference>
<dbReference type="PDB" id="7TEQ">
    <property type="method" value="EM"/>
    <property type="resolution" value="7.51 A"/>
    <property type="chains" value="B/D=27-852"/>
</dbReference>
<dbReference type="PDB" id="7TER">
    <property type="method" value="EM"/>
    <property type="resolution" value="5.23 A"/>
    <property type="chains" value="B/D=27-852"/>
</dbReference>
<dbReference type="PDB" id="7TES">
    <property type="method" value="EM"/>
    <property type="resolution" value="4.70 A"/>
    <property type="chains" value="B/D=27-852"/>
</dbReference>
<dbReference type="PDB" id="7TET">
    <property type="method" value="EM"/>
    <property type="resolution" value="4.45 A"/>
    <property type="chains" value="B/D=27-852"/>
</dbReference>
<dbReference type="PDB" id="8G18">
    <property type="method" value="X-ray"/>
    <property type="resolution" value="2.85 A"/>
    <property type="chains" value="B/D=32-394"/>
</dbReference>
<dbReference type="PDB" id="8VUY">
    <property type="method" value="EM"/>
    <property type="resolution" value="3.81 A"/>
    <property type="chains" value="B/D=34-845"/>
</dbReference>
<dbReference type="PDB" id="8VVH">
    <property type="method" value="EM"/>
    <property type="resolution" value="3.95 A"/>
    <property type="chains" value="B=34-387"/>
</dbReference>
<dbReference type="PDB" id="8XLK">
    <property type="method" value="EM"/>
    <property type="resolution" value="4.20 A"/>
    <property type="chains" value="D=1-1482"/>
</dbReference>
<dbReference type="PDB" id="9ARE">
    <property type="method" value="EM"/>
    <property type="resolution" value="3.72 A"/>
    <property type="chains" value="B/D=27-852"/>
</dbReference>
<dbReference type="PDB" id="9ARF">
    <property type="method" value="EM"/>
    <property type="resolution" value="3.13 A"/>
    <property type="chains" value="B/D=27-852"/>
</dbReference>
<dbReference type="PDB" id="9ARG">
    <property type="method" value="EM"/>
    <property type="resolution" value="4.05 A"/>
    <property type="chains" value="B/D=27-852"/>
</dbReference>
<dbReference type="PDB" id="9ARH">
    <property type="method" value="EM"/>
    <property type="resolution" value="3.69 A"/>
    <property type="chains" value="B/D=27-852"/>
</dbReference>
<dbReference type="PDB" id="9ARI">
    <property type="method" value="EM"/>
    <property type="resolution" value="3.90 A"/>
    <property type="chains" value="B/D=27-852"/>
</dbReference>
<dbReference type="PDB" id="9JNN">
    <property type="method" value="EM"/>
    <property type="resolution" value="5.40 A"/>
    <property type="chains" value="B/D=35-845"/>
</dbReference>
<dbReference type="PDBsum" id="3JPW"/>
<dbReference type="PDBsum" id="3JPY"/>
<dbReference type="PDBsum" id="3QEL"/>
<dbReference type="PDBsum" id="3QEM"/>
<dbReference type="PDBsum" id="4PE5"/>
<dbReference type="PDBsum" id="5B3J"/>
<dbReference type="PDBsum" id="5FXG"/>
<dbReference type="PDBsum" id="5FXH"/>
<dbReference type="PDBsum" id="5FXI"/>
<dbReference type="PDBsum" id="5FXJ"/>
<dbReference type="PDBsum" id="5FXK"/>
<dbReference type="PDBsum" id="5TPZ"/>
<dbReference type="PDBsum" id="6CNA"/>
<dbReference type="PDBsum" id="6E7R"/>
<dbReference type="PDBsum" id="6E7S"/>
<dbReference type="PDBsum" id="6E7T"/>
<dbReference type="PDBsum" id="6E7U"/>
<dbReference type="PDBsum" id="6E7V"/>
<dbReference type="PDBsum" id="6E7W"/>
<dbReference type="PDBsum" id="6E7X"/>
<dbReference type="PDBsum" id="6WHR"/>
<dbReference type="PDBsum" id="6WHS"/>
<dbReference type="PDBsum" id="6WHT"/>
<dbReference type="PDBsum" id="6WHU"/>
<dbReference type="PDBsum" id="6WHV"/>
<dbReference type="PDBsum" id="6WHW"/>
<dbReference type="PDBsum" id="6WHX"/>
<dbReference type="PDBsum" id="6WHY"/>
<dbReference type="PDBsum" id="6WI0"/>
<dbReference type="PDBsum" id="6WI1"/>
<dbReference type="PDBsum" id="7SAA"/>
<dbReference type="PDBsum" id="7SAB"/>
<dbReference type="PDBsum" id="7SAC"/>
<dbReference type="PDBsum" id="7SAD"/>
<dbReference type="PDBsum" id="7TE6"/>
<dbReference type="PDBsum" id="7TE9"/>
<dbReference type="PDBsum" id="7TEB"/>
<dbReference type="PDBsum" id="7TEE"/>
<dbReference type="PDBsum" id="7TEQ"/>
<dbReference type="PDBsum" id="7TER"/>
<dbReference type="PDBsum" id="7TES"/>
<dbReference type="PDBsum" id="7TET"/>
<dbReference type="PDBsum" id="8G18"/>
<dbReference type="PDBsum" id="8VUY"/>
<dbReference type="PDBsum" id="8VVH"/>
<dbReference type="PDBsum" id="8XLK"/>
<dbReference type="PDBsum" id="9ARE"/>
<dbReference type="PDBsum" id="9ARF"/>
<dbReference type="PDBsum" id="9ARG"/>
<dbReference type="PDBsum" id="9ARH"/>
<dbReference type="PDBsum" id="9ARI"/>
<dbReference type="PDBsum" id="9JNN"/>
<dbReference type="EMDB" id="EMD-21673"/>
<dbReference type="EMDB" id="EMD-21674"/>
<dbReference type="EMDB" id="EMD-21675"/>
<dbReference type="EMDB" id="EMD-21676"/>
<dbReference type="EMDB" id="EMD-21677"/>
<dbReference type="EMDB" id="EMD-21678"/>
<dbReference type="EMDB" id="EMD-21679"/>
<dbReference type="EMDB" id="EMD-21680"/>
<dbReference type="EMDB" id="EMD-21681"/>
<dbReference type="EMDB" id="EMD-21682"/>
<dbReference type="EMDB" id="EMD-24946"/>
<dbReference type="EMDB" id="EMD-24947"/>
<dbReference type="EMDB" id="EMD-24948"/>
<dbReference type="EMDB" id="EMD-24949"/>
<dbReference type="EMDB" id="EMD-25843"/>
<dbReference type="EMDB" id="EMD-25844"/>
<dbReference type="EMDB" id="EMD-25845"/>
<dbReference type="EMDB" id="EMD-25849"/>
<dbReference type="EMDB" id="EMD-25850"/>
<dbReference type="EMDB" id="EMD-25851"/>
<dbReference type="EMDB" id="EMD-25852"/>
<dbReference type="EMDB" id="EMD-3352"/>
<dbReference type="EMDB" id="EMD-3353"/>
<dbReference type="EMDB" id="EMD-3354"/>
<dbReference type="EMDB" id="EMD-3355"/>
<dbReference type="EMDB" id="EMD-3356"/>
<dbReference type="EMDB" id="EMD-38451"/>
<dbReference type="EMDB" id="EMD-43544"/>
<dbReference type="EMDB" id="EMD-43559"/>
<dbReference type="EMDB" id="EMD-43779"/>
<dbReference type="EMDB" id="EMD-43780"/>
<dbReference type="EMDB" id="EMD-43781"/>
<dbReference type="EMDB" id="EMD-43782"/>
<dbReference type="EMDB" id="EMD-43783"/>
<dbReference type="EMDB" id="EMD-61622"/>
<dbReference type="EMDB" id="EMD-7529"/>
<dbReference type="SMR" id="Q00960"/>
<dbReference type="BioGRID" id="246575">
    <property type="interactions" value="28"/>
</dbReference>
<dbReference type="ComplexPortal" id="CPX-284">
    <property type="entry name" value="NMDA receptor complex, GluN1-GluN2B"/>
</dbReference>
<dbReference type="ComplexPortal" id="CPX-295">
    <property type="entry name" value="NMDA receptor complex, GluN1-GluN2A-GluN2B"/>
</dbReference>
<dbReference type="CORUM" id="Q00960"/>
<dbReference type="DIP" id="DIP-33702N"/>
<dbReference type="FunCoup" id="Q00960">
    <property type="interactions" value="733"/>
</dbReference>
<dbReference type="IntAct" id="Q00960">
    <property type="interactions" value="20"/>
</dbReference>
<dbReference type="MINT" id="Q00960"/>
<dbReference type="STRING" id="10116.ENSRNOP00000011697"/>
<dbReference type="BindingDB" id="Q00960"/>
<dbReference type="ChEMBL" id="CHEMBL311"/>
<dbReference type="DrugCentral" id="Q00960"/>
<dbReference type="GuidetoPHARMACOLOGY" id="457"/>
<dbReference type="TCDB" id="1.A.10.1.6">
    <property type="family name" value="the glutamate-gated ion channel (gic) family of neurotransmitter receptors"/>
</dbReference>
<dbReference type="GlyCosmos" id="Q00960">
    <property type="glycosylation" value="7 sites, 11 glycans"/>
</dbReference>
<dbReference type="GlyGen" id="Q00960">
    <property type="glycosylation" value="7 sites, 11 N-linked glycans (3 sites), 3 N-linked;o-linked glycans (2 sites)"/>
</dbReference>
<dbReference type="iPTMnet" id="Q00960"/>
<dbReference type="PhosphoSitePlus" id="Q00960"/>
<dbReference type="SwissPalm" id="Q00960"/>
<dbReference type="PaxDb" id="10116-ENSRNOP00000011697"/>
<dbReference type="ABCD" id="Q00960">
    <property type="antibodies" value="6 sequenced antibodies"/>
</dbReference>
<dbReference type="GeneID" id="24410"/>
<dbReference type="KEGG" id="rno:24410"/>
<dbReference type="UCSC" id="RGD:2738">
    <property type="organism name" value="rat"/>
</dbReference>
<dbReference type="AGR" id="RGD:2738"/>
<dbReference type="CTD" id="2904"/>
<dbReference type="RGD" id="2738">
    <property type="gene designation" value="Grin2b"/>
</dbReference>
<dbReference type="eggNOG" id="KOG1053">
    <property type="taxonomic scope" value="Eukaryota"/>
</dbReference>
<dbReference type="InParanoid" id="Q00960"/>
<dbReference type="OrthoDB" id="5984008at2759"/>
<dbReference type="PhylomeDB" id="Q00960"/>
<dbReference type="Reactome" id="R-RNO-3928662">
    <property type="pathway name" value="EPHB-mediated forward signaling"/>
</dbReference>
<dbReference type="Reactome" id="R-RNO-438066">
    <property type="pathway name" value="Unblocking of NMDA receptors, glutamate binding and activation"/>
</dbReference>
<dbReference type="Reactome" id="R-RNO-5673001">
    <property type="pathway name" value="RAF/MAP kinase cascade"/>
</dbReference>
<dbReference type="Reactome" id="R-RNO-8849932">
    <property type="pathway name" value="Synaptic adhesion-like molecules"/>
</dbReference>
<dbReference type="Reactome" id="R-RNO-9609736">
    <property type="pathway name" value="Assembly and cell surface presentation of NMDA receptors"/>
</dbReference>
<dbReference type="CD-CODE" id="A7E9CBB4">
    <property type="entry name" value="Postsynaptic density"/>
</dbReference>
<dbReference type="EvolutionaryTrace" id="Q00960"/>
<dbReference type="PRO" id="PR:Q00960"/>
<dbReference type="Proteomes" id="UP000002494">
    <property type="component" value="Unplaced"/>
</dbReference>
<dbReference type="GO" id="GO:0097440">
    <property type="term" value="C:apical dendrite"/>
    <property type="evidence" value="ECO:0000314"/>
    <property type="project" value="RGD"/>
</dbReference>
<dbReference type="GO" id="GO:0009986">
    <property type="term" value="C:cell surface"/>
    <property type="evidence" value="ECO:0000314"/>
    <property type="project" value="ARUK-UCL"/>
</dbReference>
<dbReference type="GO" id="GO:0005737">
    <property type="term" value="C:cytoplasm"/>
    <property type="evidence" value="ECO:0000314"/>
    <property type="project" value="ARUK-UCL"/>
</dbReference>
<dbReference type="GO" id="GO:0005856">
    <property type="term" value="C:cytoskeleton"/>
    <property type="evidence" value="ECO:0007669"/>
    <property type="project" value="UniProtKB-SubCell"/>
</dbReference>
<dbReference type="GO" id="GO:0044307">
    <property type="term" value="C:dendritic branch"/>
    <property type="evidence" value="ECO:0000314"/>
    <property type="project" value="RGD"/>
</dbReference>
<dbReference type="GO" id="GO:0043197">
    <property type="term" value="C:dendritic spine"/>
    <property type="evidence" value="ECO:0000314"/>
    <property type="project" value="RGD"/>
</dbReference>
<dbReference type="GO" id="GO:0005789">
    <property type="term" value="C:endoplasmic reticulum membrane"/>
    <property type="evidence" value="ECO:0000304"/>
    <property type="project" value="Reactome"/>
</dbReference>
<dbReference type="GO" id="GO:0098978">
    <property type="term" value="C:glutamatergic synapse"/>
    <property type="evidence" value="ECO:0000314"/>
    <property type="project" value="SynGO"/>
</dbReference>
<dbReference type="GO" id="GO:0098686">
    <property type="term" value="C:hippocampal mossy fiber to CA3 synapse"/>
    <property type="evidence" value="ECO:0000314"/>
    <property type="project" value="SynGO"/>
</dbReference>
<dbReference type="GO" id="GO:0005770">
    <property type="term" value="C:late endosome"/>
    <property type="evidence" value="ECO:0000250"/>
    <property type="project" value="UniProtKB"/>
</dbReference>
<dbReference type="GO" id="GO:0005764">
    <property type="term" value="C:lysosome"/>
    <property type="evidence" value="ECO:0000250"/>
    <property type="project" value="UniProtKB"/>
</dbReference>
<dbReference type="GO" id="GO:0016020">
    <property type="term" value="C:membrane"/>
    <property type="evidence" value="ECO:0000266"/>
    <property type="project" value="RGD"/>
</dbReference>
<dbReference type="GO" id="GO:0043005">
    <property type="term" value="C:neuron projection"/>
    <property type="evidence" value="ECO:0000314"/>
    <property type="project" value="UniProtKB"/>
</dbReference>
<dbReference type="GO" id="GO:0043025">
    <property type="term" value="C:neuronal cell body"/>
    <property type="evidence" value="ECO:0000314"/>
    <property type="project" value="RGD"/>
</dbReference>
<dbReference type="GO" id="GO:0017146">
    <property type="term" value="C:NMDA selective glutamate receptor complex"/>
    <property type="evidence" value="ECO:0000314"/>
    <property type="project" value="UniProtKB"/>
</dbReference>
<dbReference type="GO" id="GO:0098688">
    <property type="term" value="C:parallel fiber to Purkinje cell synapse"/>
    <property type="evidence" value="ECO:0000314"/>
    <property type="project" value="SynGO"/>
</dbReference>
<dbReference type="GO" id="GO:0005886">
    <property type="term" value="C:plasma membrane"/>
    <property type="evidence" value="ECO:0000314"/>
    <property type="project" value="UniProtKB"/>
</dbReference>
<dbReference type="GO" id="GO:0098794">
    <property type="term" value="C:postsynapse"/>
    <property type="evidence" value="ECO:0000266"/>
    <property type="project" value="RGD"/>
</dbReference>
<dbReference type="GO" id="GO:0014069">
    <property type="term" value="C:postsynaptic density"/>
    <property type="evidence" value="ECO:0000314"/>
    <property type="project" value="UniProtKB"/>
</dbReference>
<dbReference type="GO" id="GO:0098839">
    <property type="term" value="C:postsynaptic density membrane"/>
    <property type="evidence" value="ECO:0000314"/>
    <property type="project" value="SynGO"/>
</dbReference>
<dbReference type="GO" id="GO:0099092">
    <property type="term" value="C:postsynaptic density, intracellular component"/>
    <property type="evidence" value="ECO:0000314"/>
    <property type="project" value="RGD"/>
</dbReference>
<dbReference type="GO" id="GO:0045211">
    <property type="term" value="C:postsynaptic membrane"/>
    <property type="evidence" value="ECO:0000314"/>
    <property type="project" value="UniProtKB"/>
</dbReference>
<dbReference type="GO" id="GO:0048787">
    <property type="term" value="C:presynaptic active zone membrane"/>
    <property type="evidence" value="ECO:0000314"/>
    <property type="project" value="SynGO"/>
</dbReference>
<dbReference type="GO" id="GO:0042734">
    <property type="term" value="C:presynaptic membrane"/>
    <property type="evidence" value="ECO:0000314"/>
    <property type="project" value="UniProtKB"/>
</dbReference>
<dbReference type="GO" id="GO:0045202">
    <property type="term" value="C:synapse"/>
    <property type="evidence" value="ECO:0000314"/>
    <property type="project" value="UniProtKB"/>
</dbReference>
<dbReference type="GO" id="GO:0043083">
    <property type="term" value="C:synaptic cleft"/>
    <property type="evidence" value="ECO:0000314"/>
    <property type="project" value="RGD"/>
</dbReference>
<dbReference type="GO" id="GO:0097060">
    <property type="term" value="C:synaptic membrane"/>
    <property type="evidence" value="ECO:0000266"/>
    <property type="project" value="RGD"/>
</dbReference>
<dbReference type="GO" id="GO:0008021">
    <property type="term" value="C:synaptic vesicle"/>
    <property type="evidence" value="ECO:0000266"/>
    <property type="project" value="RGD"/>
</dbReference>
<dbReference type="GO" id="GO:0043195">
    <property type="term" value="C:terminal bouton"/>
    <property type="evidence" value="ECO:0000314"/>
    <property type="project" value="RGD"/>
</dbReference>
<dbReference type="GO" id="GO:0030018">
    <property type="term" value="C:Z disc"/>
    <property type="evidence" value="ECO:0000314"/>
    <property type="project" value="RGD"/>
</dbReference>
<dbReference type="GO" id="GO:0008013">
    <property type="term" value="F:beta-catenin binding"/>
    <property type="evidence" value="ECO:0000353"/>
    <property type="project" value="RGD"/>
</dbReference>
<dbReference type="GO" id="GO:0005262">
    <property type="term" value="F:calcium channel activity"/>
    <property type="evidence" value="ECO:0000266"/>
    <property type="project" value="RGD"/>
</dbReference>
<dbReference type="GO" id="GO:0050839">
    <property type="term" value="F:cell adhesion molecule binding"/>
    <property type="evidence" value="ECO:0000353"/>
    <property type="project" value="RGD"/>
</dbReference>
<dbReference type="GO" id="GO:0031749">
    <property type="term" value="F:D2 dopamine receptor binding"/>
    <property type="evidence" value="ECO:0000353"/>
    <property type="project" value="RGD"/>
</dbReference>
<dbReference type="GO" id="GO:0005234">
    <property type="term" value="F:extracellularly glutamate-gated ion channel activity"/>
    <property type="evidence" value="ECO:0000314"/>
    <property type="project" value="RGD"/>
</dbReference>
<dbReference type="GO" id="GO:0016595">
    <property type="term" value="F:glutamate binding"/>
    <property type="evidence" value="ECO:0000314"/>
    <property type="project" value="UniProtKB"/>
</dbReference>
<dbReference type="GO" id="GO:0035254">
    <property type="term" value="F:glutamate receptor binding"/>
    <property type="evidence" value="ECO:0000353"/>
    <property type="project" value="ARUK-UCL"/>
</dbReference>
<dbReference type="GO" id="GO:0022849">
    <property type="term" value="F:glutamate-gated calcium ion channel activity"/>
    <property type="evidence" value="ECO:0000250"/>
    <property type="project" value="UniProtKB"/>
</dbReference>
<dbReference type="GO" id="GO:0004970">
    <property type="term" value="F:glutamate-gated receptor activity"/>
    <property type="evidence" value="ECO:0000314"/>
    <property type="project" value="RGD"/>
</dbReference>
<dbReference type="GO" id="GO:0016594">
    <property type="term" value="F:glycine binding"/>
    <property type="evidence" value="ECO:0000266"/>
    <property type="project" value="RGD"/>
</dbReference>
<dbReference type="GO" id="GO:1901363">
    <property type="term" value="F:heterocyclic compound binding"/>
    <property type="evidence" value="ECO:0000314"/>
    <property type="project" value="RGD"/>
</dbReference>
<dbReference type="GO" id="GO:0005149">
    <property type="term" value="F:interleukin-1 receptor binding"/>
    <property type="evidence" value="ECO:0000353"/>
    <property type="project" value="RGD"/>
</dbReference>
<dbReference type="GO" id="GO:0035255">
    <property type="term" value="F:ionotropic glutamate receptor binding"/>
    <property type="evidence" value="ECO:0000353"/>
    <property type="project" value="RGD"/>
</dbReference>
<dbReference type="GO" id="GO:0099507">
    <property type="term" value="F:ligand-gated monoatomic ion channel activity involved in regulation of presynaptic membrane potential"/>
    <property type="evidence" value="ECO:0000266"/>
    <property type="project" value="RGD"/>
</dbReference>
<dbReference type="GO" id="GO:0005261">
    <property type="term" value="F:monoatomic cation channel activity"/>
    <property type="evidence" value="ECO:0000266"/>
    <property type="project" value="RGD"/>
</dbReference>
<dbReference type="GO" id="GO:0004972">
    <property type="term" value="F:NMDA glutamate receptor activity"/>
    <property type="evidence" value="ECO:0000314"/>
    <property type="project" value="UniProtKB"/>
</dbReference>
<dbReference type="GO" id="GO:1990782">
    <property type="term" value="F:protein tyrosine kinase binding"/>
    <property type="evidence" value="ECO:0000353"/>
    <property type="project" value="ARUK-UCL"/>
</dbReference>
<dbReference type="GO" id="GO:0044877">
    <property type="term" value="F:protein-containing complex binding"/>
    <property type="evidence" value="ECO:0000314"/>
    <property type="project" value="RGD"/>
</dbReference>
<dbReference type="GO" id="GO:0097110">
    <property type="term" value="F:scaffold protein binding"/>
    <property type="evidence" value="ECO:0000353"/>
    <property type="project" value="RGD"/>
</dbReference>
<dbReference type="GO" id="GO:0005102">
    <property type="term" value="F:signaling receptor binding"/>
    <property type="evidence" value="ECO:0000353"/>
    <property type="project" value="RGD"/>
</dbReference>
<dbReference type="GO" id="GO:0036094">
    <property type="term" value="F:small molecule binding"/>
    <property type="evidence" value="ECO:0000353"/>
    <property type="project" value="RGD"/>
</dbReference>
<dbReference type="GO" id="GO:1904315">
    <property type="term" value="F:transmitter-gated monoatomic ion channel activity involved in regulation of postsynaptic membrane potential"/>
    <property type="evidence" value="ECO:0000314"/>
    <property type="project" value="SynGO"/>
</dbReference>
<dbReference type="GO" id="GO:0008270">
    <property type="term" value="F:zinc ion binding"/>
    <property type="evidence" value="ECO:0000314"/>
    <property type="project" value="UniProtKB"/>
</dbReference>
<dbReference type="GO" id="GO:0001508">
    <property type="term" value="P:action potential"/>
    <property type="evidence" value="ECO:0000315"/>
    <property type="project" value="RGD"/>
</dbReference>
<dbReference type="GO" id="GO:0008306">
    <property type="term" value="P:associative learning"/>
    <property type="evidence" value="ECO:0000315"/>
    <property type="project" value="RGD"/>
</dbReference>
<dbReference type="GO" id="GO:0031223">
    <property type="term" value="P:auditory behavior"/>
    <property type="evidence" value="ECO:0000270"/>
    <property type="project" value="RGD"/>
</dbReference>
<dbReference type="GO" id="GO:0001662">
    <property type="term" value="P:behavioral fear response"/>
    <property type="evidence" value="ECO:0000315"/>
    <property type="project" value="RGD"/>
</dbReference>
<dbReference type="GO" id="GO:0048266">
    <property type="term" value="P:behavioral response to pain"/>
    <property type="evidence" value="ECO:0000266"/>
    <property type="project" value="RGD"/>
</dbReference>
<dbReference type="GO" id="GO:0097553">
    <property type="term" value="P:calcium ion transmembrane import into cytosol"/>
    <property type="evidence" value="ECO:0000250"/>
    <property type="project" value="UniProtKB"/>
</dbReference>
<dbReference type="GO" id="GO:0006816">
    <property type="term" value="P:calcium ion transport"/>
    <property type="evidence" value="ECO:0000266"/>
    <property type="project" value="RGD"/>
</dbReference>
<dbReference type="GO" id="GO:0071230">
    <property type="term" value="P:cellular response to amino acid stimulus"/>
    <property type="evidence" value="ECO:0000270"/>
    <property type="project" value="RGD"/>
</dbReference>
<dbReference type="GO" id="GO:0071386">
    <property type="term" value="P:cellular response to corticosterone stimulus"/>
    <property type="evidence" value="ECO:0000270"/>
    <property type="project" value="RGD"/>
</dbReference>
<dbReference type="GO" id="GO:1904644">
    <property type="term" value="P:cellular response to curcumin"/>
    <property type="evidence" value="ECO:0000270"/>
    <property type="project" value="RGD"/>
</dbReference>
<dbReference type="GO" id="GO:0071359">
    <property type="term" value="P:cellular response to dsRNA"/>
    <property type="evidence" value="ECO:0000270"/>
    <property type="project" value="RGD"/>
</dbReference>
<dbReference type="GO" id="GO:1904322">
    <property type="term" value="P:cellular response to forskolin"/>
    <property type="evidence" value="ECO:0000270"/>
    <property type="project" value="RGD"/>
</dbReference>
<dbReference type="GO" id="GO:0071363">
    <property type="term" value="P:cellular response to growth factor stimulus"/>
    <property type="evidence" value="ECO:0000270"/>
    <property type="project" value="RGD"/>
</dbReference>
<dbReference type="GO" id="GO:0071396">
    <property type="term" value="P:cellular response to lipid"/>
    <property type="evidence" value="ECO:0000270"/>
    <property type="project" value="RGD"/>
</dbReference>
<dbReference type="GO" id="GO:0010350">
    <property type="term" value="P:cellular response to magnesium starvation"/>
    <property type="evidence" value="ECO:0000270"/>
    <property type="project" value="RGD"/>
</dbReference>
<dbReference type="GO" id="GO:0071287">
    <property type="term" value="P:cellular response to manganese ion"/>
    <property type="evidence" value="ECO:0000270"/>
    <property type="project" value="RGD"/>
</dbReference>
<dbReference type="GO" id="GO:0021987">
    <property type="term" value="P:cerebral cortex development"/>
    <property type="evidence" value="ECO:0000270"/>
    <property type="project" value="RGD"/>
</dbReference>
<dbReference type="GO" id="GO:0007268">
    <property type="term" value="P:chemical synaptic transmission"/>
    <property type="evidence" value="ECO:0000266"/>
    <property type="project" value="RGD"/>
</dbReference>
<dbReference type="GO" id="GO:0050966">
    <property type="term" value="P:detection of mechanical stimulus involved in sensory perception of pain"/>
    <property type="evidence" value="ECO:0000266"/>
    <property type="project" value="RGD"/>
</dbReference>
<dbReference type="GO" id="GO:0060079">
    <property type="term" value="P:excitatory postsynaptic potential"/>
    <property type="evidence" value="ECO:0000266"/>
    <property type="project" value="RGD"/>
</dbReference>
<dbReference type="GO" id="GO:0042596">
    <property type="term" value="P:fear response"/>
    <property type="evidence" value="ECO:0000266"/>
    <property type="project" value="RGD"/>
</dbReference>
<dbReference type="GO" id="GO:0021766">
    <property type="term" value="P:hippocampus development"/>
    <property type="evidence" value="ECO:0000270"/>
    <property type="project" value="RGD"/>
</dbReference>
<dbReference type="GO" id="GO:0001701">
    <property type="term" value="P:in utero embryonic development"/>
    <property type="evidence" value="ECO:0000266"/>
    <property type="project" value="RGD"/>
</dbReference>
<dbReference type="GO" id="GO:0006874">
    <property type="term" value="P:intracellular calcium ion homeostasis"/>
    <property type="evidence" value="ECO:0000315"/>
    <property type="project" value="RGD"/>
</dbReference>
<dbReference type="GO" id="GO:0035235">
    <property type="term" value="P:ionotropic glutamate receptor signaling pathway"/>
    <property type="evidence" value="ECO:0000314"/>
    <property type="project" value="RGD"/>
</dbReference>
<dbReference type="GO" id="GO:0007612">
    <property type="term" value="P:learning"/>
    <property type="evidence" value="ECO:0000266"/>
    <property type="project" value="RGD"/>
</dbReference>
<dbReference type="GO" id="GO:0007611">
    <property type="term" value="P:learning or memory"/>
    <property type="evidence" value="ECO:0000315"/>
    <property type="project" value="ARUK-UCL"/>
</dbReference>
<dbReference type="GO" id="GO:0007616">
    <property type="term" value="P:long-term memory"/>
    <property type="evidence" value="ECO:0000270"/>
    <property type="project" value="RGD"/>
</dbReference>
<dbReference type="GO" id="GO:0060291">
    <property type="term" value="P:long-term synaptic potentiation"/>
    <property type="evidence" value="ECO:0000270"/>
    <property type="project" value="RGD"/>
</dbReference>
<dbReference type="GO" id="GO:0007613">
    <property type="term" value="P:memory"/>
    <property type="evidence" value="ECO:0000314"/>
    <property type="project" value="UniProtKB"/>
</dbReference>
<dbReference type="GO" id="GO:0098655">
    <property type="term" value="P:monoatomic cation transmembrane transport"/>
    <property type="evidence" value="ECO:0000266"/>
    <property type="project" value="RGD"/>
</dbReference>
<dbReference type="GO" id="GO:0006812">
    <property type="term" value="P:monoatomic cation transport"/>
    <property type="evidence" value="ECO:0000266"/>
    <property type="project" value="RGD"/>
</dbReference>
<dbReference type="GO" id="GO:0033555">
    <property type="term" value="P:multicellular organismal response to stress"/>
    <property type="evidence" value="ECO:0000270"/>
    <property type="project" value="RGD"/>
</dbReference>
<dbReference type="GO" id="GO:1902951">
    <property type="term" value="P:negative regulation of dendritic spine maintenance"/>
    <property type="evidence" value="ECO:0000266"/>
    <property type="project" value="RGD"/>
</dbReference>
<dbReference type="GO" id="GO:0048666">
    <property type="term" value="P:neuron development"/>
    <property type="evidence" value="ECO:0000270"/>
    <property type="project" value="RGD"/>
</dbReference>
<dbReference type="GO" id="GO:2000463">
    <property type="term" value="P:positive regulation of excitatory postsynaptic potential"/>
    <property type="evidence" value="ECO:0000314"/>
    <property type="project" value="ComplexPortal"/>
</dbReference>
<dbReference type="GO" id="GO:0014049">
    <property type="term" value="P:positive regulation of glutamate secretion"/>
    <property type="evidence" value="ECO:0000314"/>
    <property type="project" value="UniProtKB"/>
</dbReference>
<dbReference type="GO" id="GO:0097151">
    <property type="term" value="P:positive regulation of inhibitory postsynaptic potential"/>
    <property type="evidence" value="ECO:0000315"/>
    <property type="project" value="RGD"/>
</dbReference>
<dbReference type="GO" id="GO:0051968">
    <property type="term" value="P:positive regulation of synaptic transmission, glutamatergic"/>
    <property type="evidence" value="ECO:0000314"/>
    <property type="project" value="ComplexPortal"/>
</dbReference>
<dbReference type="GO" id="GO:0051290">
    <property type="term" value="P:protein heterotetramerization"/>
    <property type="evidence" value="ECO:0000314"/>
    <property type="project" value="UniProtKB"/>
</dbReference>
<dbReference type="GO" id="GO:0043113">
    <property type="term" value="P:receptor clustering"/>
    <property type="evidence" value="ECO:0000314"/>
    <property type="project" value="RGD"/>
</dbReference>
<dbReference type="GO" id="GO:0032012">
    <property type="term" value="P:regulation of ARF protein signal transduction"/>
    <property type="evidence" value="ECO:0000316"/>
    <property type="project" value="RGD"/>
</dbReference>
<dbReference type="GO" id="GO:0141161">
    <property type="term" value="P:regulation of cAMP/PKA signal transduction"/>
    <property type="evidence" value="ECO:0000266"/>
    <property type="project" value="RGD"/>
</dbReference>
<dbReference type="GO" id="GO:0048169">
    <property type="term" value="P:regulation of long-term neuronal synaptic plasticity"/>
    <property type="evidence" value="ECO:0000315"/>
    <property type="project" value="RGD"/>
</dbReference>
<dbReference type="GO" id="GO:1900452">
    <property type="term" value="P:regulation of long-term synaptic depression"/>
    <property type="evidence" value="ECO:0000315"/>
    <property type="project" value="RGD"/>
</dbReference>
<dbReference type="GO" id="GO:0043408">
    <property type="term" value="P:regulation of MAPK cascade"/>
    <property type="evidence" value="ECO:0000315"/>
    <property type="project" value="UniProtKB"/>
</dbReference>
<dbReference type="GO" id="GO:1904062">
    <property type="term" value="P:regulation of monoatomic cation transmembrane transport"/>
    <property type="evidence" value="ECO:0000250"/>
    <property type="project" value="ComplexPortal"/>
</dbReference>
<dbReference type="GO" id="GO:0048168">
    <property type="term" value="P:regulation of neuronal synaptic plasticity"/>
    <property type="evidence" value="ECO:0000303"/>
    <property type="project" value="ComplexPortal"/>
</dbReference>
<dbReference type="GO" id="GO:0060078">
    <property type="term" value="P:regulation of postsynaptic membrane potential"/>
    <property type="evidence" value="ECO:0000266"/>
    <property type="project" value="RGD"/>
</dbReference>
<dbReference type="GO" id="GO:0048167">
    <property type="term" value="P:regulation of synaptic plasticity"/>
    <property type="evidence" value="ECO:0000266"/>
    <property type="project" value="RGD"/>
</dbReference>
<dbReference type="GO" id="GO:0014075">
    <property type="term" value="P:response to amine"/>
    <property type="evidence" value="ECO:0000270"/>
    <property type="project" value="RGD"/>
</dbReference>
<dbReference type="GO" id="GO:0001975">
    <property type="term" value="P:response to amphetamine"/>
    <property type="evidence" value="ECO:0000270"/>
    <property type="project" value="RGD"/>
</dbReference>
<dbReference type="GO" id="GO:0051592">
    <property type="term" value="P:response to calcium ion"/>
    <property type="evidence" value="ECO:0000270"/>
    <property type="project" value="RGD"/>
</dbReference>
<dbReference type="GO" id="GO:0009743">
    <property type="term" value="P:response to carbohydrate"/>
    <property type="evidence" value="ECO:0000270"/>
    <property type="project" value="RGD"/>
</dbReference>
<dbReference type="GO" id="GO:0042220">
    <property type="term" value="P:response to cocaine"/>
    <property type="evidence" value="ECO:0000270"/>
    <property type="project" value="RGD"/>
</dbReference>
<dbReference type="GO" id="GO:0034097">
    <property type="term" value="P:response to cytokine"/>
    <property type="evidence" value="ECO:0000270"/>
    <property type="project" value="RGD"/>
</dbReference>
<dbReference type="GO" id="GO:0051602">
    <property type="term" value="P:response to electrical stimulus"/>
    <property type="evidence" value="ECO:0000270"/>
    <property type="project" value="RGD"/>
</dbReference>
<dbReference type="GO" id="GO:0045471">
    <property type="term" value="P:response to ethanol"/>
    <property type="evidence" value="ECO:0000270"/>
    <property type="project" value="RGD"/>
</dbReference>
<dbReference type="GO" id="GO:0060992">
    <property type="term" value="P:response to fungicide"/>
    <property type="evidence" value="ECO:0000270"/>
    <property type="project" value="RGD"/>
</dbReference>
<dbReference type="GO" id="GO:1903416">
    <property type="term" value="P:response to glycoside"/>
    <property type="evidence" value="ECO:0000270"/>
    <property type="project" value="RGD"/>
</dbReference>
<dbReference type="GO" id="GO:0060416">
    <property type="term" value="P:response to growth hormone"/>
    <property type="evidence" value="ECO:0000270"/>
    <property type="project" value="RGD"/>
</dbReference>
<dbReference type="GO" id="GO:1904880">
    <property type="term" value="P:response to hydrogen sulfide"/>
    <property type="evidence" value="ECO:0000270"/>
    <property type="project" value="RGD"/>
</dbReference>
<dbReference type="GO" id="GO:0001666">
    <property type="term" value="P:response to hypoxia"/>
    <property type="evidence" value="ECO:0000314"/>
    <property type="project" value="RGD"/>
</dbReference>
<dbReference type="GO" id="GO:0010288">
    <property type="term" value="P:response to lead ion"/>
    <property type="evidence" value="ECO:0000270"/>
    <property type="project" value="RGD"/>
</dbReference>
<dbReference type="GO" id="GO:0032026">
    <property type="term" value="P:response to magnesium ion"/>
    <property type="evidence" value="ECO:0000270"/>
    <property type="project" value="RGD"/>
</dbReference>
<dbReference type="GO" id="GO:0010042">
    <property type="term" value="P:response to manganese ion"/>
    <property type="evidence" value="ECO:0000270"/>
    <property type="project" value="RGD"/>
</dbReference>
<dbReference type="GO" id="GO:0009612">
    <property type="term" value="P:response to mechanical stimulus"/>
    <property type="evidence" value="ECO:0000270"/>
    <property type="project" value="RGD"/>
</dbReference>
<dbReference type="GO" id="GO:0051597">
    <property type="term" value="P:response to methylmercury"/>
    <property type="evidence" value="ECO:0000270"/>
    <property type="project" value="RGD"/>
</dbReference>
<dbReference type="GO" id="GO:0035094">
    <property type="term" value="P:response to nicotine"/>
    <property type="evidence" value="ECO:0000270"/>
    <property type="project" value="RGD"/>
</dbReference>
<dbReference type="GO" id="GO:0051707">
    <property type="term" value="P:response to other organism"/>
    <property type="evidence" value="ECO:0000270"/>
    <property type="project" value="RGD"/>
</dbReference>
<dbReference type="GO" id="GO:0009636">
    <property type="term" value="P:response to toxic substance"/>
    <property type="evidence" value="ECO:0000270"/>
    <property type="project" value="RGD"/>
</dbReference>
<dbReference type="GO" id="GO:0048511">
    <property type="term" value="P:rhythmic process"/>
    <property type="evidence" value="ECO:0000314"/>
    <property type="project" value="RGD"/>
</dbReference>
<dbReference type="GO" id="GO:0046960">
    <property type="term" value="P:sensitization"/>
    <property type="evidence" value="ECO:0000315"/>
    <property type="project" value="RGD"/>
</dbReference>
<dbReference type="GO" id="GO:0007423">
    <property type="term" value="P:sensory organ development"/>
    <property type="evidence" value="ECO:0000266"/>
    <property type="project" value="RGD"/>
</dbReference>
<dbReference type="GO" id="GO:0001964">
    <property type="term" value="P:startle response"/>
    <property type="evidence" value="ECO:0000266"/>
    <property type="project" value="RGD"/>
</dbReference>
<dbReference type="GO" id="GO:0001967">
    <property type="term" value="P:suckling behavior"/>
    <property type="evidence" value="ECO:0000266"/>
    <property type="project" value="RGD"/>
</dbReference>
<dbReference type="GO" id="GO:0035249">
    <property type="term" value="P:synaptic transmission, glutamatergic"/>
    <property type="evidence" value="ECO:0000318"/>
    <property type="project" value="GO_Central"/>
</dbReference>
<dbReference type="CDD" id="cd06378">
    <property type="entry name" value="PBP1_iGluR_NMDA_NR2"/>
    <property type="match status" value="1"/>
</dbReference>
<dbReference type="CDD" id="cd13718">
    <property type="entry name" value="PBP2_iGluR_NMDA_Nr2"/>
    <property type="match status" value="1"/>
</dbReference>
<dbReference type="FunFam" id="3.40.50.2300:FF:000312">
    <property type="entry name" value="Glutamate ionotropic receptor NMDA type subunit 2B"/>
    <property type="match status" value="1"/>
</dbReference>
<dbReference type="FunFam" id="1.10.287.70:FF:000199">
    <property type="entry name" value="Glutamate receptor ionotropic, NMDA 2B"/>
    <property type="match status" value="1"/>
</dbReference>
<dbReference type="FunFam" id="3.40.50.2300:FF:000020">
    <property type="entry name" value="Glutamate receptor ionotropic, NMDA 2B, putative"/>
    <property type="match status" value="1"/>
</dbReference>
<dbReference type="FunFam" id="3.40.190.10:FF:000007">
    <property type="entry name" value="Putative glutamate receptor ionotropic NMDA 2B"/>
    <property type="match status" value="1"/>
</dbReference>
<dbReference type="FunFam" id="3.40.190.10:FF:000038">
    <property type="entry name" value="Putative glutamate receptor ionotropic NMDA 2B"/>
    <property type="match status" value="1"/>
</dbReference>
<dbReference type="Gene3D" id="1.10.287.70">
    <property type="match status" value="1"/>
</dbReference>
<dbReference type="Gene3D" id="3.40.50.2300">
    <property type="match status" value="2"/>
</dbReference>
<dbReference type="Gene3D" id="3.40.190.10">
    <property type="entry name" value="Periplasmic binding protein-like II"/>
    <property type="match status" value="3"/>
</dbReference>
<dbReference type="InterPro" id="IPR001828">
    <property type="entry name" value="ANF_lig-bd_rcpt"/>
</dbReference>
<dbReference type="InterPro" id="IPR019594">
    <property type="entry name" value="Glu/Gly-bd"/>
</dbReference>
<dbReference type="InterPro" id="IPR001508">
    <property type="entry name" value="Iono_Glu_rcpt_met"/>
</dbReference>
<dbReference type="InterPro" id="IPR015683">
    <property type="entry name" value="Ionotropic_Glu_rcpt"/>
</dbReference>
<dbReference type="InterPro" id="IPR001320">
    <property type="entry name" value="Iontro_rcpt_C"/>
</dbReference>
<dbReference type="InterPro" id="IPR018884">
    <property type="entry name" value="NMDAR2_C"/>
</dbReference>
<dbReference type="InterPro" id="IPR028082">
    <property type="entry name" value="Peripla_BP_I"/>
</dbReference>
<dbReference type="PANTHER" id="PTHR18966">
    <property type="entry name" value="IONOTROPIC GLUTAMATE RECEPTOR"/>
    <property type="match status" value="1"/>
</dbReference>
<dbReference type="Pfam" id="PF01094">
    <property type="entry name" value="ANF_receptor"/>
    <property type="match status" value="1"/>
</dbReference>
<dbReference type="Pfam" id="PF00060">
    <property type="entry name" value="Lig_chan"/>
    <property type="match status" value="1"/>
</dbReference>
<dbReference type="Pfam" id="PF10613">
    <property type="entry name" value="Lig_chan-Glu_bd"/>
    <property type="match status" value="1"/>
</dbReference>
<dbReference type="Pfam" id="PF10565">
    <property type="entry name" value="NMDAR2_C"/>
    <property type="match status" value="1"/>
</dbReference>
<dbReference type="PRINTS" id="PR00177">
    <property type="entry name" value="NMDARECEPTOR"/>
</dbReference>
<dbReference type="SMART" id="SM00918">
    <property type="entry name" value="Lig_chan-Glu_bd"/>
    <property type="match status" value="1"/>
</dbReference>
<dbReference type="SMART" id="SM00079">
    <property type="entry name" value="PBPe"/>
    <property type="match status" value="1"/>
</dbReference>
<dbReference type="SUPFAM" id="SSF53822">
    <property type="entry name" value="Periplasmic binding protein-like I"/>
    <property type="match status" value="1"/>
</dbReference>
<dbReference type="SUPFAM" id="SSF53850">
    <property type="entry name" value="Periplasmic binding protein-like II"/>
    <property type="match status" value="1"/>
</dbReference>
<name>NMDE2_RAT</name>
<feature type="signal peptide" evidence="5">
    <location>
        <begin position="1"/>
        <end position="26"/>
    </location>
</feature>
<feature type="chain" id="PRO_0000011579" description="Glutamate receptor ionotropic, NMDA 2B">
    <location>
        <begin position="27"/>
        <end position="1482"/>
    </location>
</feature>
<feature type="topological domain" description="Extracellular" evidence="14">
    <location>
        <begin position="27"/>
        <end position="557"/>
    </location>
</feature>
<feature type="transmembrane region" description="Helical" evidence="14">
    <location>
        <begin position="558"/>
        <end position="576"/>
    </location>
</feature>
<feature type="topological domain" description="Cytoplasmic" evidence="14">
    <location>
        <begin position="577"/>
        <end position="603"/>
    </location>
</feature>
<feature type="intramembrane region" description="Discontinuously helical" evidence="27">
    <location>
        <begin position="604"/>
        <end position="623"/>
    </location>
</feature>
<feature type="topological domain" description="Cytoplasmic" evidence="14">
    <location>
        <begin position="624"/>
        <end position="630"/>
    </location>
</feature>
<feature type="transmembrane region" description="Helical" evidence="14">
    <location>
        <begin position="631"/>
        <end position="646"/>
    </location>
</feature>
<feature type="topological domain" description="Extracellular" evidence="14">
    <location>
        <begin position="647"/>
        <end position="817"/>
    </location>
</feature>
<feature type="transmembrane region" description="Helical" evidence="14">
    <location>
        <begin position="818"/>
        <end position="837"/>
    </location>
</feature>
<feature type="topological domain" description="Cytoplasmic" evidence="14">
    <location>
        <begin position="838"/>
        <end position="1482"/>
    </location>
</feature>
<feature type="region of interest" description="Pore-forming" evidence="14 27">
    <location>
        <begin position="604"/>
        <end position="623"/>
    </location>
</feature>
<feature type="region of interest" description="Disordered" evidence="6">
    <location>
        <begin position="1161"/>
        <end position="1194"/>
    </location>
</feature>
<feature type="region of interest" description="Disordered" evidence="6">
    <location>
        <begin position="1269"/>
        <end position="1301"/>
    </location>
</feature>
<feature type="region of interest" description="Interaction with DAPK1" evidence="3">
    <location>
        <begin position="1292"/>
        <end position="1304"/>
    </location>
</feature>
<feature type="short sequence motif" description="PDZ-binding">
    <location>
        <begin position="1480"/>
        <end position="1482"/>
    </location>
</feature>
<feature type="compositionally biased region" description="Polar residues" evidence="6">
    <location>
        <begin position="1272"/>
        <end position="1289"/>
    </location>
</feature>
<feature type="compositionally biased region" description="Basic residues" evidence="6">
    <location>
        <begin position="1290"/>
        <end position="1301"/>
    </location>
</feature>
<feature type="binding site" evidence="10 30">
    <location>
        <position position="127"/>
    </location>
    <ligand>
        <name>Zn(2+)</name>
        <dbReference type="ChEBI" id="CHEBI:29105"/>
        <label>1</label>
        <note>inhibitor</note>
    </ligand>
</feature>
<feature type="binding site" evidence="10 30">
    <location>
        <position position="284"/>
    </location>
    <ligand>
        <name>Zn(2+)</name>
        <dbReference type="ChEBI" id="CHEBI:29105"/>
        <label>1</label>
        <note>inhibitor</note>
    </ligand>
</feature>
<feature type="binding site" evidence="14 33">
    <location>
        <position position="514"/>
    </location>
    <ligand>
        <name>L-glutamate</name>
        <dbReference type="ChEBI" id="CHEBI:29985"/>
    </ligand>
</feature>
<feature type="binding site" evidence="14 33">
    <location>
        <position position="519"/>
    </location>
    <ligand>
        <name>L-glutamate</name>
        <dbReference type="ChEBI" id="CHEBI:29985"/>
    </ligand>
</feature>
<feature type="binding site" evidence="14 33">
    <location>
        <position position="690"/>
    </location>
    <ligand>
        <name>L-glutamate</name>
        <dbReference type="ChEBI" id="CHEBI:29985"/>
    </ligand>
</feature>
<feature type="binding site" evidence="14 33">
    <location>
        <position position="691"/>
    </location>
    <ligand>
        <name>L-glutamate</name>
        <dbReference type="ChEBI" id="CHEBI:29985"/>
    </ligand>
</feature>
<feature type="binding site" evidence="14 33">
    <location>
        <position position="732"/>
    </location>
    <ligand>
        <name>L-glutamate</name>
        <dbReference type="ChEBI" id="CHEBI:29985"/>
    </ligand>
</feature>
<feature type="site" description="Functional determinant of NMDA receptors" evidence="1">
    <location>
        <position position="615"/>
    </location>
</feature>
<feature type="modified residue" description="Phosphoserine" evidence="41">
    <location>
        <position position="882"/>
    </location>
</feature>
<feature type="modified residue" description="Phosphoserine" evidence="41">
    <location>
        <position position="886"/>
    </location>
</feature>
<feature type="modified residue" description="Phosphoserine" evidence="41">
    <location>
        <position position="917"/>
    </location>
</feature>
<feature type="modified residue" description="Phosphoserine" evidence="41">
    <location>
        <position position="920"/>
    </location>
</feature>
<feature type="modified residue" description="Phosphotyrosine" evidence="3">
    <location>
        <position position="962"/>
    </location>
</feature>
<feature type="modified residue" description="Phosphotyrosine" evidence="41">
    <location>
        <position position="1039"/>
    </location>
</feature>
<feature type="modified residue" description="Phosphoserine" evidence="3">
    <location>
        <position position="1058"/>
    </location>
</feature>
<feature type="modified residue" description="Phosphoserine" evidence="3">
    <location>
        <position position="1061"/>
    </location>
</feature>
<feature type="modified residue" description="Phosphoserine" evidence="3">
    <location>
        <position position="1064"/>
    </location>
</feature>
<feature type="modified residue" description="Phosphotyrosine" evidence="3">
    <location>
        <position position="1109"/>
    </location>
</feature>
<feature type="modified residue" description="Phosphotyrosine" evidence="3">
    <location>
        <position position="1133"/>
    </location>
</feature>
<feature type="modified residue" description="Phosphoserine" evidence="3">
    <location>
        <position position="1143"/>
    </location>
</feature>
<feature type="modified residue" description="Phosphotyrosine" evidence="3">
    <location>
        <position position="1155"/>
    </location>
</feature>
<feature type="modified residue" description="Phosphoserine" evidence="41">
    <location>
        <position position="1255"/>
    </location>
</feature>
<feature type="modified residue" description="Phosphoserine" evidence="41">
    <location>
        <position position="1259"/>
    </location>
</feature>
<feature type="modified residue" description="Phosphoserine" evidence="41">
    <location>
        <position position="1303"/>
    </location>
</feature>
<feature type="modified residue" description="Phosphotyrosine" evidence="3">
    <location>
        <position position="1472"/>
    </location>
</feature>
<feature type="glycosylation site" description="N-linked (GlcNAc...) asparagine" evidence="10 14 29 30 31 32 33">
    <location>
        <position position="74"/>
    </location>
</feature>
<feature type="glycosylation site" description="N-linked (GlcNAc...) asparagine" evidence="10 11 14 17 29 30 31 32 33 40">
    <location>
        <position position="341"/>
    </location>
</feature>
<feature type="glycosylation site" description="N-linked (GlcNAc...) asparagine" evidence="5">
    <location>
        <position position="348"/>
    </location>
</feature>
<feature type="glycosylation site" description="N-linked (GlcNAc...) asparagine" evidence="5">
    <location>
        <position position="444"/>
    </location>
</feature>
<feature type="glycosylation site" description="N-linked (GlcNAc...) asparagine" evidence="5">
    <location>
        <position position="491"/>
    </location>
</feature>
<feature type="glycosylation site" description="N-linked (GlcNAc...) asparagine" evidence="5">
    <location>
        <position position="542"/>
    </location>
</feature>
<feature type="glycosylation site" description="N-linked (GlcNAc...) asparagine" evidence="14 33">
    <location>
        <position position="688"/>
    </location>
</feature>
<feature type="disulfide bond" evidence="10 29 30 31 32 33 34 40">
    <location>
        <begin position="86"/>
        <end position="321"/>
    </location>
</feature>
<feature type="disulfide bond" evidence="14 33">
    <location>
        <begin position="429"/>
        <end position="456"/>
    </location>
</feature>
<feature type="disulfide bond" evidence="14 33">
    <location>
        <begin position="436"/>
        <end position="457"/>
    </location>
</feature>
<feature type="disulfide bond" evidence="14 33">
    <location>
        <begin position="746"/>
        <end position="801"/>
    </location>
</feature>
<feature type="mutagenesis site" description="Normal zinc binding." evidence="10">
    <original>H</original>
    <variation>A</variation>
    <location>
        <position position="60"/>
    </location>
</feature>
<feature type="mutagenesis site" description="Reduced zinc binding." evidence="10">
    <original>H</original>
    <variation>A</variation>
    <location>
        <position position="127"/>
    </location>
</feature>
<feature type="mutagenesis site" description="Slightly reduced zinc binding." evidence="10">
    <original>D</original>
    <variation>A</variation>
    <location>
        <position position="283"/>
    </location>
</feature>
<feature type="mutagenesis site" description="Reduced zinc binding." evidence="10">
    <original>E</original>
    <variation>A</variation>
    <location>
        <position position="284"/>
    </location>
</feature>
<feature type="mutagenesis site" description="Normal zinc binding." evidence="10">
    <original>H</original>
    <variation>A</variation>
    <location>
        <position position="311"/>
    </location>
</feature>
<feature type="mutagenesis site" description="Normal zinc binding." evidence="10">
    <original>H</original>
    <variation>A</variation>
    <location>
        <position position="359"/>
    </location>
</feature>
<feature type="mutagenesis site" description="Decreased localization to the cell membrane. Decreased interaction with DLG3 and DLG4. No effect on glutamate-gated calcium ion channel activity." evidence="18">
    <original>S</original>
    <variation>L</variation>
    <location>
        <position position="1413"/>
    </location>
</feature>
<feature type="mutagenesis site" description="No effect on localizationto the cell membrane. Decreased interaction with DLG3 and DLG4. No effect on glutamate-gated calcium ion channel activity." evidence="18">
    <original>L</original>
    <variation>F</variation>
    <location>
        <position position="1422"/>
    </location>
</feature>
<feature type="mutagenesis site" description="No effect on localizationto the cell membrane. Decreased interaction with DLG3 and DLG4. No effect on glutamate-gated calcium ion channel activity." evidence="18">
    <original>S</original>
    <variation>F</variation>
    <location>
        <position position="1450"/>
    </location>
</feature>
<feature type="sequence conflict" description="In Ref. 2; AAA50554." evidence="26" ref="2">
    <original>E</original>
    <variation>K</variation>
    <location>
        <position position="1256"/>
    </location>
</feature>
<feature type="sequence conflict" description="In Ref. 2; AAA50554." evidence="26" ref="2">
    <original>VT</original>
    <variation>SA</variation>
    <location>
        <begin position="1430"/>
        <end position="1431"/>
    </location>
</feature>
<feature type="strand" evidence="45">
    <location>
        <begin position="34"/>
        <end position="44"/>
    </location>
</feature>
<feature type="helix" evidence="45">
    <location>
        <begin position="47"/>
        <end position="53"/>
    </location>
</feature>
<feature type="helix" evidence="45">
    <location>
        <begin position="54"/>
        <end position="59"/>
    </location>
</feature>
<feature type="strand" evidence="45">
    <location>
        <begin position="62"/>
        <end position="73"/>
    </location>
</feature>
<feature type="helix" evidence="45">
    <location>
        <begin position="78"/>
        <end position="91"/>
    </location>
</feature>
<feature type="strand" evidence="45">
    <location>
        <begin position="94"/>
        <end position="103"/>
    </location>
</feature>
<feature type="helix" evidence="45">
    <location>
        <begin position="107"/>
        <end position="119"/>
    </location>
</feature>
<feature type="strand" evidence="45">
    <location>
        <begin position="123"/>
        <end position="127"/>
    </location>
</feature>
<feature type="helix" evidence="45">
    <location>
        <begin position="128"/>
        <end position="131"/>
    </location>
</feature>
<feature type="strand" evidence="45">
    <location>
        <begin position="143"/>
        <end position="147"/>
    </location>
</feature>
<feature type="helix" evidence="45">
    <location>
        <begin position="150"/>
        <end position="163"/>
    </location>
</feature>
<feature type="strand" evidence="45">
    <location>
        <begin position="168"/>
        <end position="173"/>
    </location>
</feature>
<feature type="helix" evidence="45">
    <location>
        <begin position="179"/>
        <end position="191"/>
    </location>
</feature>
<feature type="strand" evidence="45">
    <location>
        <begin position="193"/>
        <end position="195"/>
    </location>
</feature>
<feature type="strand" evidence="45">
    <location>
        <begin position="198"/>
        <end position="204"/>
    </location>
</feature>
<feature type="strand" evidence="42">
    <location>
        <begin position="211"/>
        <end position="213"/>
    </location>
</feature>
<feature type="helix" evidence="45">
    <location>
        <begin position="215"/>
        <end position="220"/>
    </location>
</feature>
<feature type="strand" evidence="45">
    <location>
        <begin position="226"/>
        <end position="232"/>
    </location>
</feature>
<feature type="helix" evidence="45">
    <location>
        <begin position="234"/>
        <end position="246"/>
    </location>
</feature>
<feature type="turn" evidence="46">
    <location>
        <begin position="248"/>
        <end position="250"/>
    </location>
</feature>
<feature type="strand" evidence="43">
    <location>
        <begin position="251"/>
        <end position="253"/>
    </location>
</feature>
<feature type="strand" evidence="45">
    <location>
        <begin position="255"/>
        <end position="258"/>
    </location>
</feature>
<feature type="helix" evidence="45">
    <location>
        <begin position="260"/>
        <end position="263"/>
    </location>
</feature>
<feature type="strand" evidence="44">
    <location>
        <begin position="265"/>
        <end position="267"/>
    </location>
</feature>
<feature type="strand" evidence="44">
    <location>
        <begin position="271"/>
        <end position="273"/>
    </location>
</feature>
<feature type="strand" evidence="45">
    <location>
        <begin position="278"/>
        <end position="281"/>
    </location>
</feature>
<feature type="strand" evidence="45">
    <location>
        <begin position="283"/>
        <end position="287"/>
    </location>
</feature>
<feature type="helix" evidence="45">
    <location>
        <begin position="289"/>
        <end position="311"/>
    </location>
</feature>
<feature type="turn" evidence="45">
    <location>
        <begin position="322"/>
        <end position="325"/>
    </location>
</feature>
<feature type="helix" evidence="45">
    <location>
        <begin position="326"/>
        <end position="330"/>
    </location>
</feature>
<feature type="helix" evidence="45">
    <location>
        <begin position="336"/>
        <end position="339"/>
    </location>
</feature>
<feature type="strand" evidence="47">
    <location>
        <begin position="343"/>
        <end position="346"/>
    </location>
</feature>
<feature type="strand" evidence="45">
    <location>
        <begin position="355"/>
        <end position="359"/>
    </location>
</feature>
<feature type="strand" evidence="45">
    <location>
        <begin position="362"/>
        <end position="367"/>
    </location>
</feature>
<feature type="strand" evidence="46">
    <location>
        <begin position="369"/>
        <end position="371"/>
    </location>
</feature>
<feature type="strand" evidence="45">
    <location>
        <begin position="373"/>
        <end position="380"/>
    </location>
</feature>
<feature type="strand" evidence="45">
    <location>
        <begin position="383"/>
        <end position="387"/>
    </location>
</feature>
<feature type="strand" evidence="46">
    <location>
        <begin position="405"/>
        <end position="410"/>
    </location>
</feature>
<feature type="turn" evidence="46">
    <location>
        <begin position="414"/>
        <end position="416"/>
    </location>
</feature>
<feature type="strand" evidence="46">
    <location>
        <begin position="417"/>
        <end position="421"/>
    </location>
</feature>
<feature type="turn" evidence="46">
    <location>
        <begin position="424"/>
        <end position="426"/>
    </location>
</feature>
<feature type="strand" evidence="46">
    <location>
        <begin position="434"/>
        <end position="439"/>
    </location>
</feature>
<feature type="strand" evidence="46">
    <location>
        <begin position="444"/>
        <end position="446"/>
    </location>
</feature>
<feature type="strand" evidence="46">
    <location>
        <begin position="452"/>
        <end position="459"/>
    </location>
</feature>
<feature type="helix" evidence="46">
    <location>
        <begin position="460"/>
        <end position="472"/>
    </location>
</feature>
<feature type="strand" evidence="46">
    <location>
        <begin position="475"/>
        <end position="480"/>
    </location>
</feature>
<feature type="strand" evidence="46">
    <location>
        <begin position="483"/>
        <end position="486"/>
    </location>
</feature>
<feature type="helix" evidence="46">
    <location>
        <begin position="496"/>
        <end position="502"/>
    </location>
</feature>
<feature type="strand" evidence="46">
    <location>
        <begin position="504"/>
        <end position="506"/>
    </location>
</feature>
<feature type="strand" evidence="48">
    <location>
        <begin position="507"/>
        <end position="509"/>
    </location>
</feature>
<feature type="helix" evidence="46">
    <location>
        <begin position="518"/>
        <end position="521"/>
    </location>
</feature>
<feature type="strand" evidence="46">
    <location>
        <begin position="523"/>
        <end position="525"/>
    </location>
</feature>
<feature type="strand" evidence="46">
    <location>
        <begin position="529"/>
        <end position="532"/>
    </location>
</feature>
<feature type="strand" evidence="46">
    <location>
        <begin position="534"/>
        <end position="539"/>
    </location>
</feature>
<feature type="turn" evidence="46">
    <location>
        <begin position="547"/>
        <end position="551"/>
    </location>
</feature>
<feature type="strand" evidence="46">
    <location>
        <begin position="552"/>
        <end position="554"/>
    </location>
</feature>
<feature type="helix" evidence="46">
    <location>
        <begin position="556"/>
        <end position="578"/>
    </location>
</feature>
<feature type="helix" evidence="46">
    <location>
        <begin position="603"/>
        <end position="613"/>
    </location>
</feature>
<feature type="helix" evidence="46">
    <location>
        <begin position="626"/>
        <end position="655"/>
    </location>
</feature>
<feature type="helix" evidence="46">
    <location>
        <begin position="669"/>
        <end position="672"/>
    </location>
</feature>
<feature type="strand" evidence="46">
    <location>
        <begin position="674"/>
        <end position="679"/>
    </location>
</feature>
<feature type="strand" evidence="46">
    <location>
        <begin position="687"/>
        <end position="689"/>
    </location>
</feature>
<feature type="helix" evidence="46">
    <location>
        <begin position="690"/>
        <end position="698"/>
    </location>
</feature>
<feature type="helix" evidence="46">
    <location>
        <begin position="700"/>
        <end position="705"/>
    </location>
</feature>
<feature type="helix" evidence="46">
    <location>
        <begin position="706"/>
        <end position="709"/>
    </location>
</feature>
<feature type="helix" evidence="46">
    <location>
        <begin position="714"/>
        <end position="722"/>
    </location>
</feature>
<feature type="strand" evidence="46">
    <location>
        <begin position="727"/>
        <end position="732"/>
    </location>
</feature>
<feature type="helix" evidence="46">
    <location>
        <begin position="733"/>
        <end position="740"/>
    </location>
</feature>
<feature type="strand" evidence="46">
    <location>
        <begin position="744"/>
        <end position="746"/>
    </location>
</feature>
<feature type="strand" evidence="46">
    <location>
        <begin position="748"/>
        <end position="750"/>
    </location>
</feature>
<feature type="helix" evidence="46">
    <location>
        <begin position="751"/>
        <end position="753"/>
    </location>
</feature>
<feature type="strand" evidence="46">
    <location>
        <begin position="760"/>
        <end position="762"/>
    </location>
</feature>
<feature type="helix" evidence="46">
    <location>
        <begin position="772"/>
        <end position="785"/>
    </location>
</feature>
<feature type="helix" evidence="46">
    <location>
        <begin position="788"/>
        <end position="796"/>
    </location>
</feature>
<feature type="helix" evidence="46">
    <location>
        <begin position="815"/>
        <end position="844"/>
    </location>
</feature>
<sequence>MKPSAECCSPKFWLVLAVLAVSGSKARSQKSPPSIGIAVILVGTSDEVAIKDAHEKDDFHHLSVVPRVELVAMNETDPKSIITRICDLMSDRKIQGVVFADDTDQEAIAQILDFISAQTLTPILGIHGGSSMIMADKDESSMFFQFGPSIEQQASVMLNIMEEYDWYIFSIVTTYFPGYQDFVNKIRSTIENSFVGWELEEVLLLDMSLDDGDSKIQNQLKKLQSPIILLYCTKEEATYIFEVANSVGLTGYGYTWIVPSLVAGDTDTVPSEFPTGLISVSYDEWDYGLPARVRDGIAIITTAASDMLSEHSFIPEPKSSCYNTHEKRIYQSNMLNRYLINVTFEGRNLSFSEDGYQMHPKLVIILLNKERKWERVGKWKDKSLQMKYYVWPRMCPETEEQEDDHLSIVTLEEAPFVIVESVDPLSGTCMRNTVPCQKRIISENKTDEEPGYIKKCCKGFCIDILKKISKSVKFTYDLYLVTNGKHGKKINGTWNGMIGEVVMKRAYMAVGSLTINEERSEVVDFSVPFIETGISVMVSRSNGTVSPSAFLEPFSADVWVMMFVMLLIVSAVAVFVFEYFSPVGYNRCLADGREPGGPSFTIGKAIWLLWGLVFNNSVPVQNPKGTTSKIMVSVWAFFAVIFLASYTANLAAFMIQEEYVDQVSGLSDKKFQRPNDFSPPFRFGTVPNGSTERNIRNNYAEMHAYMGKFNQRGVDDALLSLKTGKLDAFIYDAAVLNYMAGRDEGCKLVTIGSGKVFASTGYGIAIQKDSGWKRQVDLAILQLFGDGEMEELEALWLTGICHNEKNEVMSSQLDIDNMAGVFYMLGAAMALSLITFICEHLFYWQFRHCFMGVCSGKPGMVFSISRGIYSCIHGVAIEERQSVMNSPTATMNNTHSNILRLLRTAKNMANLSGVNGSPQSALDFIRRESSVYDISEHRRSFTHSDCKSYNNPPCEENLFSDYISEVERTFGNLQLKDSNVYQDHYHHHHRPHSIGSTSSIDGLYDCDNPPFTTQPRSISKKPLDIGLPSSKHSQLSDLYGKFSFKSDRYSGHDDLIRSDVSDISTHTVTYGNIEGNAAKRRKQQYKDSLKKRPASAKSRREFDEIELAYRRRPPRSPDHKRYFRDKEGLRDFYLDQFRTKENSPHWEHVDLTDIYKERSDDFKRDSVSGGGPCTNRSHLKHGTGEKHGVVGGVPAPWEKNLTNVDWEDRSGGNFCRSCPSKLHNYSSTVAGQNSGRQACIRCEACKKAGNLYDISEDNSLQELDQPAAPVAVTSNASSTKYPQSPTNSKAQKKNRNKLRRQHSYDTFVDLQKEEAALAPRSVSLKDKGRFMDGSPYAHMFEMPAGESSFANKSSVPTAGHHHNNPGSGYMLSKSLYPDRVTQNPFIPTFGDDQCLLHGSKSYFFRQPTVAGASKTRPDFRALVTNKPVVVTLHGAVPGRFQKDICIGNQSNPCVPNNKNPRAFNGSSNGHVYEKLSSIESDV</sequence>
<gene>
    <name evidence="28" type="primary">Grin2b</name>
</gene>
<organism>
    <name type="scientific">Rattus norvegicus</name>
    <name type="common">Rat</name>
    <dbReference type="NCBI Taxonomy" id="10116"/>
    <lineage>
        <taxon>Eukaryota</taxon>
        <taxon>Metazoa</taxon>
        <taxon>Chordata</taxon>
        <taxon>Craniata</taxon>
        <taxon>Vertebrata</taxon>
        <taxon>Euteleostomi</taxon>
        <taxon>Mammalia</taxon>
        <taxon>Eutheria</taxon>
        <taxon>Euarchontoglires</taxon>
        <taxon>Glires</taxon>
        <taxon>Rodentia</taxon>
        <taxon>Myomorpha</taxon>
        <taxon>Muroidea</taxon>
        <taxon>Muridae</taxon>
        <taxon>Murinae</taxon>
        <taxon>Rattus</taxon>
    </lineage>
</organism>